<protein>
    <recommendedName>
        <fullName>Membrane cofactor protein</fullName>
    </recommendedName>
    <alternativeName>
        <fullName>TLX</fullName>
    </alternativeName>
    <alternativeName>
        <fullName>Trophoblast leukocyte common antigen</fullName>
    </alternativeName>
    <cdAntigenName>CD46</cdAntigenName>
</protein>
<accession>P15529</accession>
<accession>A0T1T0</accession>
<accession>A0T1T1</accession>
<accession>A0T1T2</accession>
<accession>Q15429</accession>
<accession>Q53GV9</accession>
<accession>Q5HY94</accession>
<accession>Q5VWS6</accession>
<accession>Q5VWS7</accession>
<accession>Q5VWS8</accession>
<accession>Q5VWS9</accession>
<accession>Q5VWT0</accession>
<accession>Q5VWT1</accession>
<accession>Q5VWT2</accession>
<accession>Q6N0A1</accession>
<accession>Q7Z3R5</accession>
<accession>Q9NNW2</accession>
<accession>Q9NNW3</accession>
<accession>Q9NNW4</accession>
<accession>Q9UCJ4</accession>
<proteinExistence type="evidence at protein level"/>
<feature type="signal peptide" evidence="18 30 31 35">
    <location>
        <begin position="1"/>
        <end position="34"/>
    </location>
</feature>
<feature type="chain" id="PRO_0000006008" description="Membrane cofactor protein">
    <location>
        <begin position="35"/>
        <end position="392"/>
    </location>
</feature>
<feature type="topological domain" description="Extracellular" evidence="1">
    <location>
        <begin position="35"/>
        <end position="343"/>
    </location>
</feature>
<feature type="transmembrane region" description="Helical" evidence="1">
    <location>
        <begin position="344"/>
        <end position="366"/>
    </location>
</feature>
<feature type="topological domain" description="Cytoplasmic" evidence="1">
    <location>
        <begin position="367"/>
        <end position="392"/>
    </location>
</feature>
<feature type="domain" description="Sushi 1" evidence="2">
    <location>
        <begin position="35"/>
        <end position="96"/>
    </location>
</feature>
<feature type="domain" description="Sushi 2" evidence="2">
    <location>
        <begin position="97"/>
        <end position="159"/>
    </location>
</feature>
<feature type="domain" description="Sushi 3" evidence="2">
    <location>
        <begin position="160"/>
        <end position="225"/>
    </location>
</feature>
<feature type="domain" description="Sushi 4" evidence="2">
    <location>
        <begin position="226"/>
        <end position="285"/>
    </location>
</feature>
<feature type="region of interest" description="Disordered" evidence="3">
    <location>
        <begin position="291"/>
        <end position="328"/>
    </location>
</feature>
<feature type="compositionally biased region" description="Low complexity" evidence="3">
    <location>
        <begin position="291"/>
        <end position="315"/>
    </location>
</feature>
<feature type="glycosylation site" description="N-linked (GlcNAc...) asparagine">
    <location>
        <position position="83"/>
    </location>
</feature>
<feature type="glycosylation site" description="N-linked (GlcNAc...) asparagine" evidence="28 53 54">
    <location>
        <position position="114"/>
    </location>
</feature>
<feature type="glycosylation site" description="O-linked (GalNAc...) threonine" evidence="1">
    <location>
        <position position="163"/>
    </location>
</feature>
<feature type="glycosylation site" description="N-linked (GlcNAc...) asparagine">
    <location>
        <position position="273"/>
    </location>
</feature>
<feature type="glycosylation site" description="O-linked (GalNAc...) serine" evidence="1">
    <location>
        <position position="290"/>
    </location>
</feature>
<feature type="glycosylation site" description="O-linked (GalNAc...) serine" evidence="1">
    <location>
        <position position="291"/>
    </location>
</feature>
<feature type="glycosylation site" description="O-linked (GalNAc...) threonine" evidence="1">
    <location>
        <position position="292"/>
    </location>
</feature>
<feature type="glycosylation site" description="O-linked (GalNAc...) serine" evidence="1">
    <location>
        <position position="298"/>
    </location>
</feature>
<feature type="glycosylation site" description="O-linked (GalNAc...) serine" evidence="1">
    <location>
        <position position="300"/>
    </location>
</feature>
<feature type="glycosylation site" description="O-linked (GalNAc...) serine" evidence="1">
    <location>
        <position position="302"/>
    </location>
</feature>
<feature type="glycosylation site" description="O-linked (GalNAc...) threonine" evidence="1">
    <location>
        <position position="303"/>
    </location>
</feature>
<feature type="glycosylation site" description="O-linked (GalNAc...) serine" evidence="1">
    <location>
        <position position="304"/>
    </location>
</feature>
<feature type="glycosylation site" description="O-linked (GalNAc...) serine" evidence="1">
    <location>
        <position position="305"/>
    </location>
</feature>
<feature type="glycosylation site" description="O-linked (GalNAc...) threonine" evidence="1">
    <location>
        <position position="306"/>
    </location>
</feature>
<feature type="glycosylation site" description="O-linked (GalNAc...) threonine" evidence="1">
    <location>
        <position position="307"/>
    </location>
</feature>
<feature type="glycosylation site" description="O-linked (GalNAc...) serine" evidence="1">
    <location>
        <position position="309"/>
    </location>
</feature>
<feature type="glycosylation site" description="O-linked (GalNAc...) serine" evidence="1">
    <location>
        <position position="312"/>
    </location>
</feature>
<feature type="glycosylation site" description="O-linked (GalNAc...) serine" evidence="1">
    <location>
        <position position="313"/>
    </location>
</feature>
<feature type="glycosylation site" description="O-linked (GalNAc...) serine" evidence="1">
    <location>
        <position position="315"/>
    </location>
</feature>
<feature type="glycosylation site" description="O-linked (GalNAc...) threonine" evidence="1">
    <location>
        <position position="320"/>
    </location>
</feature>
<feature type="glycosylation site" description="O-linked (GalNAc...) serine" evidence="1">
    <location>
        <position position="326"/>
    </location>
</feature>
<feature type="disulfide bond" evidence="2">
    <location>
        <begin position="35"/>
        <end position="80"/>
    </location>
</feature>
<feature type="disulfide bond" evidence="2">
    <location>
        <begin position="64"/>
        <end position="94"/>
    </location>
</feature>
<feature type="disulfide bond" evidence="2">
    <location>
        <begin position="99"/>
        <end position="141"/>
    </location>
</feature>
<feature type="disulfide bond" evidence="2">
    <location>
        <begin position="127"/>
        <end position="157"/>
    </location>
</feature>
<feature type="disulfide bond" evidence="2">
    <location>
        <begin position="162"/>
        <end position="210"/>
    </location>
</feature>
<feature type="disulfide bond" evidence="2">
    <location>
        <begin position="191"/>
        <end position="223"/>
    </location>
</feature>
<feature type="disulfide bond" evidence="2">
    <location>
        <begin position="228"/>
        <end position="270"/>
    </location>
</feature>
<feature type="disulfide bond" evidence="2">
    <location>
        <begin position="256"/>
        <end position="283"/>
    </location>
</feature>
<feature type="splice variant" id="VSP_019005" description="In isoform 3." evidence="52">
    <original>D</original>
    <variation>G</variation>
    <location>
        <position position="33"/>
    </location>
</feature>
<feature type="splice variant" id="VSP_019006" description="In isoform 3." evidence="52">
    <location>
        <begin position="34"/>
        <end position="96"/>
    </location>
</feature>
<feature type="splice variant" id="VSP_009176" description="In isoform K and isoform L." evidence="50">
    <location>
        <begin position="286"/>
        <end position="329"/>
    </location>
</feature>
<feature type="splice variant" id="VSP_009175" description="In isoform E, isoform F and isoform N." evidence="44 45 48 49 50">
    <location>
        <begin position="286"/>
        <end position="315"/>
    </location>
</feature>
<feature type="splice variant" id="VSP_009174" description="In isoform C, isoform D, isoform I, isoform J and isoform M." evidence="42 43 44 45 46 47 50">
    <location>
        <begin position="286"/>
        <end position="300"/>
    </location>
</feature>
<feature type="splice variant" id="VSP_001201" description="In isoform 2." evidence="52">
    <location>
        <begin position="301"/>
        <end position="305"/>
    </location>
</feature>
<feature type="splice variant" id="VSP_009177" description="In isoform G, isoform H, isoform I and isoform J." evidence="52">
    <location>
        <begin position="316"/>
        <end position="329"/>
    </location>
</feature>
<feature type="splice variant" id="VSP_009178" description="In isoform N." evidence="49">
    <original>VVGVAVICVVPYRYLQRRKKKGTYLTDETHREVKFTSL</original>
    <variation>GKQMVELNMPLTRLNQPLQQSREAE</variation>
    <location>
        <begin position="355"/>
        <end position="392"/>
    </location>
</feature>
<feature type="splice variant" id="VSP_001202" description="In isoform M." evidence="52">
    <location>
        <begin position="355"/>
        <end position="367"/>
    </location>
</feature>
<feature type="splice variant" id="VSP_001203" description="In isoform M." evidence="52">
    <original>YLQRRKKKGTYLTDETHREVKFTSL</original>
    <variation>GKQMVELNMPLTRLNQPLQQSREAE</variation>
    <location>
        <begin position="368"/>
        <end position="392"/>
    </location>
</feature>
<feature type="splice variant" id="VSP_001204" description="In isoform B, isoform D, isoform F, isoform H, isoform J, isoform L and isoform 3." evidence="42 43 44 45 47 48 50 51">
    <original>TYLTDETHREVKFTSL</original>
    <variation>KADGGAEYATYQTKSTTPAEQRG</variation>
    <location>
        <begin position="377"/>
        <end position="392"/>
    </location>
</feature>
<feature type="sequence variant" id="VAR_026567" description="In dbSNP:rs138843816." evidence="5 41">
    <original>S</original>
    <variation>F</variation>
    <location>
        <position position="13"/>
    </location>
</feature>
<feature type="sequence variant" id="VAR_063656" description="In AHUS2; dbSNP:rs121909591." evidence="25">
    <original>C</original>
    <variation>Y</variation>
    <location>
        <position position="35"/>
    </location>
</feature>
<feature type="sequence variant" id="VAR_026568" description="In dbSNP:rs780693519." evidence="5">
    <original>R</original>
    <variation>Q</variation>
    <location>
        <position position="59"/>
    </location>
</feature>
<feature type="sequence variant" id="VAR_026569" description="In AHUS2; reduced cell surface expression; dbSNP:rs759136081." evidence="24">
    <original>P</original>
    <variation>S</variation>
    <location>
        <position position="165"/>
    </location>
</feature>
<feature type="sequence variant" id="VAR_063657" description="In AHUS2; dbSNP:rs1656197837." evidence="29">
    <original>W</original>
    <variation>C</variation>
    <location>
        <position position="216"/>
    </location>
</feature>
<feature type="sequence variant" id="VAR_035828" description="In a colorectal cancer sample; somatic mutation." evidence="26">
    <original>C</original>
    <variation>Y</variation>
    <location>
        <position position="228"/>
    </location>
</feature>
<feature type="sequence variant" id="VAR_063658" description="In AHUS2; dbSNP:rs1271761432." evidence="29">
    <original>P</original>
    <variation>R</variation>
    <location>
        <position position="231"/>
    </location>
</feature>
<feature type="sequence variant" id="VAR_026570" description="In AHUS2; no change in cell surface expression but reduced activity; dbSNP:rs121909589." evidence="15">
    <original>S</original>
    <variation>P</variation>
    <location>
        <position position="240"/>
    </location>
</feature>
<feature type="sequence variant" id="VAR_022262" description="In dbSNP:rs17006830." evidence="40">
    <original>D</original>
    <variation>N</variation>
    <location>
        <position position="266"/>
    </location>
</feature>
<feature type="sequence variant" id="VAR_026571" description="In AHUS2; no cell surface expression." evidence="15">
    <location>
        <begin position="271"/>
        <end position="272"/>
    </location>
</feature>
<feature type="sequence variant" id="VAR_022263" description="In dbSNP:rs41317833." evidence="40">
    <original>P</original>
    <variation>L</variation>
    <location>
        <position position="324"/>
    </location>
</feature>
<feature type="sequence variant" id="VAR_022264" description="In dbSNP:rs35366573." evidence="26 40">
    <original>A</original>
    <variation>V</variation>
    <location>
        <position position="353"/>
    </location>
</feature>
<feature type="sequence variant" id="VAR_022265" evidence="40">
    <original>V</original>
    <variation>G</variation>
    <location>
        <position position="355"/>
    </location>
</feature>
<feature type="mutagenesis site" description="No effect on cytoprotective function. No effect on Neisseria binding. No effect on Measles virus binding." evidence="8 37 39">
    <original>N</original>
    <variation>Q</variation>
    <location>
        <position position="83"/>
    </location>
</feature>
<feature type="mutagenesis site" description="Strongly decreases cytoprotective function. Decreases Neisseria binding. Abolishes Measles virus binding." evidence="8 37 39">
    <original>N</original>
    <variation>Q</variation>
    <location>
        <position position="114"/>
    </location>
</feature>
<feature type="mutagenesis site" description="Strongly decreases cytoprotective function. Abolishes Neisseria binding. No effect on Measles virus binding." evidence="8 37 39">
    <original>N</original>
    <variation>Q</variation>
    <location>
        <position position="273"/>
    </location>
</feature>
<feature type="sequence conflict" description="In Ref. 8; CAE45719." evidence="52" ref="8">
    <original>V</original>
    <variation>A</variation>
    <location>
        <position position="25"/>
    </location>
</feature>
<feature type="sequence conflict" description="In Ref. 8; CAD97694." evidence="52" ref="8">
    <original>G</original>
    <variation>S</variation>
    <location>
        <position position="108"/>
    </location>
</feature>
<feature type="sequence conflict" description="In Ref. 8; CAD97694." evidence="52" ref="8">
    <original>K</original>
    <variation>S</variation>
    <location>
        <position position="159"/>
    </location>
</feature>
<feature type="sequence conflict" description="In Ref. 8; CAI45983." evidence="52" ref="8">
    <original>C</original>
    <variation>R</variation>
    <location>
        <position position="162"/>
    </location>
</feature>
<feature type="strand" evidence="55">
    <location>
        <begin position="42"/>
        <end position="48"/>
    </location>
</feature>
<feature type="strand" evidence="55">
    <location>
        <begin position="59"/>
        <end position="64"/>
    </location>
</feature>
<feature type="strand" evidence="55">
    <location>
        <begin position="68"/>
        <end position="70"/>
    </location>
</feature>
<feature type="strand" evidence="55">
    <location>
        <begin position="72"/>
        <end position="74"/>
    </location>
</feature>
<feature type="strand" evidence="55">
    <location>
        <begin position="77"/>
        <end position="80"/>
    </location>
</feature>
<feature type="strand" evidence="55">
    <location>
        <begin position="84"/>
        <end position="86"/>
    </location>
</feature>
<feature type="helix" evidence="57">
    <location>
        <begin position="91"/>
        <end position="93"/>
    </location>
</feature>
<feature type="strand" evidence="55">
    <location>
        <begin position="94"/>
        <end position="96"/>
    </location>
</feature>
<feature type="strand" evidence="55">
    <location>
        <begin position="108"/>
        <end position="112"/>
    </location>
</feature>
<feature type="strand" evidence="55">
    <location>
        <begin position="115"/>
        <end position="118"/>
    </location>
</feature>
<feature type="strand" evidence="55">
    <location>
        <begin position="122"/>
        <end position="127"/>
    </location>
</feature>
<feature type="strand" evidence="55">
    <location>
        <begin position="131"/>
        <end position="135"/>
    </location>
</feature>
<feature type="strand" evidence="55">
    <location>
        <begin position="137"/>
        <end position="146"/>
    </location>
</feature>
<feature type="strand" evidence="55">
    <location>
        <begin position="148"/>
        <end position="152"/>
    </location>
</feature>
<feature type="strand" evidence="55">
    <location>
        <begin position="156"/>
        <end position="159"/>
    </location>
</feature>
<feature type="strand" evidence="56">
    <location>
        <begin position="171"/>
        <end position="174"/>
    </location>
</feature>
<feature type="strand" evidence="56">
    <location>
        <begin position="183"/>
        <end position="191"/>
    </location>
</feature>
<feature type="strand" evidence="56">
    <location>
        <begin position="195"/>
        <end position="198"/>
    </location>
</feature>
<feature type="strand" evidence="56">
    <location>
        <begin position="201"/>
        <end position="204"/>
    </location>
</feature>
<feature type="strand" evidence="56">
    <location>
        <begin position="206"/>
        <end position="210"/>
    </location>
</feature>
<feature type="helix" evidence="56">
    <location>
        <begin position="212"/>
        <end position="214"/>
    </location>
</feature>
<feature type="strand" evidence="56">
    <location>
        <begin position="215"/>
        <end position="218"/>
    </location>
</feature>
<feature type="strand" evidence="56">
    <location>
        <begin position="222"/>
        <end position="224"/>
    </location>
</feature>
<feature type="strand" evidence="56">
    <location>
        <begin position="236"/>
        <end position="240"/>
    </location>
</feature>
<feature type="strand" evidence="56">
    <location>
        <begin position="251"/>
        <end position="256"/>
    </location>
</feature>
<feature type="strand" evidence="56">
    <location>
        <begin position="260"/>
        <end position="264"/>
    </location>
</feature>
<feature type="strand" evidence="56">
    <location>
        <begin position="266"/>
        <end position="270"/>
    </location>
</feature>
<feature type="strand" evidence="56">
    <location>
        <begin position="276"/>
        <end position="278"/>
    </location>
</feature>
<feature type="strand" evidence="56">
    <location>
        <begin position="282"/>
        <end position="285"/>
    </location>
</feature>
<feature type="modified residue" description="Phosphotyrosine" evidence="4">
    <location sequence="P15529-2">
        <position position="384"/>
    </location>
</feature>
<feature type="modified residue" description="Phosphotyrosine" evidence="4">
    <location sequence="P15529-3">
        <position position="369"/>
    </location>
</feature>
<feature type="modified residue" description="Phosphotyrosine" evidence="4">
    <location sequence="P15529-4">
        <position position="354"/>
    </location>
</feature>
<feature type="modified residue" description="Phosphotyrosine" evidence="4">
    <location sequence="P15529-5">
        <position position="370"/>
    </location>
</feature>
<feature type="modified residue" description="Phosphotyrosine" evidence="4">
    <location sequence="P15529-6">
        <position position="355"/>
    </location>
</feature>
<feature type="modified residue" description="Phosphotyrosine" evidence="4">
    <location sequence="P15529-7">
        <position position="340"/>
    </location>
</feature>
<feature type="modified residue" description="Phosphotyrosine" evidence="4">
    <location sequence="P15529-16">
        <position position="321"/>
    </location>
</feature>
<keyword id="KW-0002">3D-structure</keyword>
<keyword id="KW-0025">Alternative splicing</keyword>
<keyword id="KW-0180">Complement pathway</keyword>
<keyword id="KW-0968">Cytoplasmic vesicle</keyword>
<keyword id="KW-0903">Direct protein sequencing</keyword>
<keyword id="KW-0225">Disease variant</keyword>
<keyword id="KW-1015">Disulfide bond</keyword>
<keyword id="KW-0278">Fertilization</keyword>
<keyword id="KW-0325">Glycoprotein</keyword>
<keyword id="KW-1068">Hemolytic uremic syndrome</keyword>
<keyword id="KW-1183">Host cell receptor for virus entry</keyword>
<keyword id="KW-0945">Host-virus interaction</keyword>
<keyword id="KW-0391">Immunity</keyword>
<keyword id="KW-0399">Innate immunity</keyword>
<keyword id="KW-0472">Membrane</keyword>
<keyword id="KW-0597">Phosphoprotein</keyword>
<keyword id="KW-1267">Proteomics identification</keyword>
<keyword id="KW-0675">Receptor</keyword>
<keyword id="KW-1185">Reference proteome</keyword>
<keyword id="KW-0677">Repeat</keyword>
<keyword id="KW-0732">Signal</keyword>
<keyword id="KW-0768">Sushi</keyword>
<keyword id="KW-0812">Transmembrane</keyword>
<keyword id="KW-1133">Transmembrane helix</keyword>
<reference key="1">
    <citation type="journal article" date="1988" name="J. Exp. Med.">
        <title>Molecular cloning and chromosomal localization of human membrane cofactor protein (MCP). Evidence for inclusion in the multigene family of complement-regulatory proteins.</title>
        <authorList>
            <person name="Lublin D.M."/>
            <person name="Liszewski M.K."/>
            <person name="Post T.W."/>
            <person name="Arce M.A."/>
            <person name="le Beau M.M."/>
            <person name="Rebentisch M.B."/>
            <person name="Lemons R.S."/>
            <person name="Seya T."/>
            <person name="Atkinson J.P."/>
        </authorList>
    </citation>
    <scope>NUCLEOTIDE SEQUENCE [MRNA] (ISOFORM D)</scope>
    <scope>PROTEIN SEQUENCE OF 35-58</scope>
    <scope>INTERACTION WITH C3B</scope>
</reference>
<reference key="2">
    <citation type="journal article" date="1991" name="Immunogenetics">
        <title>Alternatively spliced RNAs encode several isoforms of CD46 (MCP), a regulator of complement activation.</title>
        <authorList>
            <person name="Purcell D.F."/>
            <person name="Russell S.M."/>
            <person name="Deacon N.J."/>
            <person name="Brown M.A."/>
            <person name="Hooker D.J."/>
            <person name="McKenzie I.F."/>
        </authorList>
    </citation>
    <scope>NUCLEOTIDE SEQUENCE [MRNA] (ISOFORM C)</scope>
    <scope>ALTERNATIVE SPLICING</scope>
</reference>
<reference key="3">
    <citation type="journal article" date="1991" name="J. Exp. Med.">
        <title>Membrane cofactor protein of the complement system: alternative splicing of serine/threonine/proline-rich exons and cytoplasmic tails produces multiple isoforms that correlate with protein phenotype.</title>
        <authorList>
            <person name="Post T.W."/>
            <person name="Liszewski M.K."/>
            <person name="Adams E.M."/>
            <person name="Tedja I."/>
            <person name="Miller E.A."/>
            <person name="Atkinson J.P."/>
        </authorList>
    </citation>
    <scope>NUCLEOTIDE SEQUENCE [MRNA] (ISOFORMS A; B; C; D; E AND F)</scope>
</reference>
<reference key="4">
    <citation type="journal article" date="1993" name="Mol. Reprod. Dev.">
        <title>Characterization of a cDNA clone coding for human testis membrane cofactor protein (MCP, CD46).</title>
        <authorList>
            <person name="Cervoni F."/>
            <person name="Fenichel P."/>
            <person name="Akhoundi C."/>
            <person name="Hsi B.L."/>
            <person name="Rossi B."/>
        </authorList>
    </citation>
    <scope>NUCLEOTIDE SEQUENCE [MRNA] (ISOFORM F)</scope>
    <source>
        <tissue>Testis</tissue>
    </source>
</reference>
<reference key="5">
    <citation type="journal article" date="1998" name="Immunology">
        <title>Post-translational modification and intracellular localization of a splice product of CD46 cloned from human testis: role of the intracellular domains in O-glycosylation.</title>
        <authorList>
            <person name="Hara T."/>
            <person name="Suzuki Y."/>
            <person name="Nakazawa T."/>
            <person name="Nishimura H."/>
            <person name="Nagasawa S."/>
            <person name="Nishiguchi M."/>
            <person name="Matsumoto M."/>
            <person name="Hatanaka M."/>
            <person name="Kitamura M."/>
            <person name="Seya T."/>
        </authorList>
    </citation>
    <scope>NUCLEOTIDE SEQUENCE [MRNA] (ISOFORM N)</scope>
    <source>
        <tissue>Testis</tissue>
    </source>
</reference>
<reference key="6">
    <citation type="submission" date="2006-10" db="EMBL/GenBank/DDBJ databases">
        <title>Molecular cloning of human CD46 (membrane cofactor protein) CDS from cancer cell lines in a retroviral vector system.</title>
        <authorList>
            <person name="Xue Z.T."/>
            <person name="Widegren B."/>
            <person name="Salford L."/>
        </authorList>
    </citation>
    <scope>NUCLEOTIDE SEQUENCE [MRNA] (ISOFORMS D; F AND L)</scope>
</reference>
<reference key="7">
    <citation type="journal article" date="2004" name="Nat. Genet.">
        <title>Complete sequencing and characterization of 21,243 full-length human cDNAs.</title>
        <authorList>
            <person name="Ota T."/>
            <person name="Suzuki Y."/>
            <person name="Nishikawa T."/>
            <person name="Otsuki T."/>
            <person name="Sugiyama T."/>
            <person name="Irie R."/>
            <person name="Wakamatsu A."/>
            <person name="Hayashi K."/>
            <person name="Sato H."/>
            <person name="Nagai K."/>
            <person name="Kimura K."/>
            <person name="Makita H."/>
            <person name="Sekine M."/>
            <person name="Obayashi M."/>
            <person name="Nishi T."/>
            <person name="Shibahara T."/>
            <person name="Tanaka T."/>
            <person name="Ishii S."/>
            <person name="Yamamoto J."/>
            <person name="Saito K."/>
            <person name="Kawai Y."/>
            <person name="Isono Y."/>
            <person name="Nakamura Y."/>
            <person name="Nagahari K."/>
            <person name="Murakami K."/>
            <person name="Yasuda T."/>
            <person name="Iwayanagi T."/>
            <person name="Wagatsuma M."/>
            <person name="Shiratori A."/>
            <person name="Sudo H."/>
            <person name="Hosoiri T."/>
            <person name="Kaku Y."/>
            <person name="Kodaira H."/>
            <person name="Kondo H."/>
            <person name="Sugawara M."/>
            <person name="Takahashi M."/>
            <person name="Kanda K."/>
            <person name="Yokoi T."/>
            <person name="Furuya T."/>
            <person name="Kikkawa E."/>
            <person name="Omura Y."/>
            <person name="Abe K."/>
            <person name="Kamihara K."/>
            <person name="Katsuta N."/>
            <person name="Sato K."/>
            <person name="Tanikawa M."/>
            <person name="Yamazaki M."/>
            <person name="Ninomiya K."/>
            <person name="Ishibashi T."/>
            <person name="Yamashita H."/>
            <person name="Murakawa K."/>
            <person name="Fujimori K."/>
            <person name="Tanai H."/>
            <person name="Kimata M."/>
            <person name="Watanabe M."/>
            <person name="Hiraoka S."/>
            <person name="Chiba Y."/>
            <person name="Ishida S."/>
            <person name="Ono Y."/>
            <person name="Takiguchi S."/>
            <person name="Watanabe S."/>
            <person name="Yosida M."/>
            <person name="Hotuta T."/>
            <person name="Kusano J."/>
            <person name="Kanehori K."/>
            <person name="Takahashi-Fujii A."/>
            <person name="Hara H."/>
            <person name="Tanase T.-O."/>
            <person name="Nomura Y."/>
            <person name="Togiya S."/>
            <person name="Komai F."/>
            <person name="Hara R."/>
            <person name="Takeuchi K."/>
            <person name="Arita M."/>
            <person name="Imose N."/>
            <person name="Musashino K."/>
            <person name="Yuuki H."/>
            <person name="Oshima A."/>
            <person name="Sasaki N."/>
            <person name="Aotsuka S."/>
            <person name="Yoshikawa Y."/>
            <person name="Matsunawa H."/>
            <person name="Ichihara T."/>
            <person name="Shiohata N."/>
            <person name="Sano S."/>
            <person name="Moriya S."/>
            <person name="Momiyama H."/>
            <person name="Satoh N."/>
            <person name="Takami S."/>
            <person name="Terashima Y."/>
            <person name="Suzuki O."/>
            <person name="Nakagawa S."/>
            <person name="Senoh A."/>
            <person name="Mizoguchi H."/>
            <person name="Goto Y."/>
            <person name="Shimizu F."/>
            <person name="Wakebe H."/>
            <person name="Hishigaki H."/>
            <person name="Watanabe T."/>
            <person name="Sugiyama A."/>
            <person name="Takemoto M."/>
            <person name="Kawakami B."/>
            <person name="Yamazaki M."/>
            <person name="Watanabe K."/>
            <person name="Kumagai A."/>
            <person name="Itakura S."/>
            <person name="Fukuzumi Y."/>
            <person name="Fujimori Y."/>
            <person name="Komiyama M."/>
            <person name="Tashiro H."/>
            <person name="Tanigami A."/>
            <person name="Fujiwara T."/>
            <person name="Ono T."/>
            <person name="Yamada K."/>
            <person name="Fujii Y."/>
            <person name="Ozaki K."/>
            <person name="Hirao M."/>
            <person name="Ohmori Y."/>
            <person name="Kawabata A."/>
            <person name="Hikiji T."/>
            <person name="Kobatake N."/>
            <person name="Inagaki H."/>
            <person name="Ikema Y."/>
            <person name="Okamoto S."/>
            <person name="Okitani R."/>
            <person name="Kawakami T."/>
            <person name="Noguchi S."/>
            <person name="Itoh T."/>
            <person name="Shigeta K."/>
            <person name="Senba T."/>
            <person name="Matsumura K."/>
            <person name="Nakajima Y."/>
            <person name="Mizuno T."/>
            <person name="Morinaga M."/>
            <person name="Sasaki M."/>
            <person name="Togashi T."/>
            <person name="Oyama M."/>
            <person name="Hata H."/>
            <person name="Watanabe M."/>
            <person name="Komatsu T."/>
            <person name="Mizushima-Sugano J."/>
            <person name="Satoh T."/>
            <person name="Shirai Y."/>
            <person name="Takahashi Y."/>
            <person name="Nakagawa K."/>
            <person name="Okumura K."/>
            <person name="Nagase T."/>
            <person name="Nomura N."/>
            <person name="Kikuchi H."/>
            <person name="Masuho Y."/>
            <person name="Yamashita R."/>
            <person name="Nakai K."/>
            <person name="Yada T."/>
            <person name="Nakamura Y."/>
            <person name="Ohara O."/>
            <person name="Isogai T."/>
            <person name="Sugano S."/>
        </authorList>
    </citation>
    <scope>NUCLEOTIDE SEQUENCE [LARGE SCALE MRNA] (ISOFORM D)</scope>
    <source>
        <tissue>Teratocarcinoma</tissue>
    </source>
</reference>
<reference key="8">
    <citation type="journal article" date="2007" name="BMC Genomics">
        <title>The full-ORF clone resource of the German cDNA consortium.</title>
        <authorList>
            <person name="Bechtel S."/>
            <person name="Rosenfelder H."/>
            <person name="Duda A."/>
            <person name="Schmidt C.P."/>
            <person name="Ernst U."/>
            <person name="Wellenreuther R."/>
            <person name="Mehrle A."/>
            <person name="Schuster C."/>
            <person name="Bahr A."/>
            <person name="Bloecker H."/>
            <person name="Heubner D."/>
            <person name="Hoerlein A."/>
            <person name="Michel G."/>
            <person name="Wedler H."/>
            <person name="Koehrer K."/>
            <person name="Ottenwaelder B."/>
            <person name="Poustka A."/>
            <person name="Wiemann S."/>
            <person name="Schupp I."/>
        </authorList>
    </citation>
    <scope>NUCLEOTIDE SEQUENCE [LARGE SCALE MRNA] (ISOFORMS D AND E)</scope>
    <source>
        <tissue>Fetal kidney</tissue>
        <tissue>Liver</tissue>
        <tissue>Salivary gland</tissue>
    </source>
</reference>
<reference key="9">
    <citation type="submission" date="2005-04" db="EMBL/GenBank/DDBJ databases">
        <authorList>
            <person name="Suzuki Y."/>
            <person name="Sugano S."/>
            <person name="Totoki Y."/>
            <person name="Toyoda A."/>
            <person name="Takeda T."/>
            <person name="Sakaki Y."/>
            <person name="Tanaka A."/>
            <person name="Yokoyama S."/>
        </authorList>
    </citation>
    <scope>NUCLEOTIDE SEQUENCE [LARGE SCALE MRNA] (ISOFORM B)</scope>
    <scope>VARIANT PHE-13</scope>
    <source>
        <tissue>Liver</tissue>
    </source>
</reference>
<reference key="10">
    <citation type="submission" date="2005-02" db="EMBL/GenBank/DDBJ databases">
        <authorList>
            <consortium name="SeattleSNPs variation discovery resource"/>
        </authorList>
    </citation>
    <scope>NUCLEOTIDE SEQUENCE [GENOMIC DNA]</scope>
    <scope>VARIANTS ASN-266; LEU-324; VAL-353 AND GLY-355</scope>
</reference>
<reference key="11">
    <citation type="journal article" date="2006" name="Nature">
        <title>The DNA sequence and biological annotation of human chromosome 1.</title>
        <authorList>
            <person name="Gregory S.G."/>
            <person name="Barlow K.F."/>
            <person name="McLay K.E."/>
            <person name="Kaul R."/>
            <person name="Swarbreck D."/>
            <person name="Dunham A."/>
            <person name="Scott C.E."/>
            <person name="Howe K.L."/>
            <person name="Woodfine K."/>
            <person name="Spencer C.C.A."/>
            <person name="Jones M.C."/>
            <person name="Gillson C."/>
            <person name="Searle S."/>
            <person name="Zhou Y."/>
            <person name="Kokocinski F."/>
            <person name="McDonald L."/>
            <person name="Evans R."/>
            <person name="Phillips K."/>
            <person name="Atkinson A."/>
            <person name="Cooper R."/>
            <person name="Jones C."/>
            <person name="Hall R.E."/>
            <person name="Andrews T.D."/>
            <person name="Lloyd C."/>
            <person name="Ainscough R."/>
            <person name="Almeida J.P."/>
            <person name="Ambrose K.D."/>
            <person name="Anderson F."/>
            <person name="Andrew R.W."/>
            <person name="Ashwell R.I.S."/>
            <person name="Aubin K."/>
            <person name="Babbage A.K."/>
            <person name="Bagguley C.L."/>
            <person name="Bailey J."/>
            <person name="Beasley H."/>
            <person name="Bethel G."/>
            <person name="Bird C.P."/>
            <person name="Bray-Allen S."/>
            <person name="Brown J.Y."/>
            <person name="Brown A.J."/>
            <person name="Buckley D."/>
            <person name="Burton J."/>
            <person name="Bye J."/>
            <person name="Carder C."/>
            <person name="Chapman J.C."/>
            <person name="Clark S.Y."/>
            <person name="Clarke G."/>
            <person name="Clee C."/>
            <person name="Cobley V."/>
            <person name="Collier R.E."/>
            <person name="Corby N."/>
            <person name="Coville G.J."/>
            <person name="Davies J."/>
            <person name="Deadman R."/>
            <person name="Dunn M."/>
            <person name="Earthrowl M."/>
            <person name="Ellington A.G."/>
            <person name="Errington H."/>
            <person name="Frankish A."/>
            <person name="Frankland J."/>
            <person name="French L."/>
            <person name="Garner P."/>
            <person name="Garnett J."/>
            <person name="Gay L."/>
            <person name="Ghori M.R.J."/>
            <person name="Gibson R."/>
            <person name="Gilby L.M."/>
            <person name="Gillett W."/>
            <person name="Glithero R.J."/>
            <person name="Grafham D.V."/>
            <person name="Griffiths C."/>
            <person name="Griffiths-Jones S."/>
            <person name="Grocock R."/>
            <person name="Hammond S."/>
            <person name="Harrison E.S.I."/>
            <person name="Hart E."/>
            <person name="Haugen E."/>
            <person name="Heath P.D."/>
            <person name="Holmes S."/>
            <person name="Holt K."/>
            <person name="Howden P.J."/>
            <person name="Hunt A.R."/>
            <person name="Hunt S.E."/>
            <person name="Hunter G."/>
            <person name="Isherwood J."/>
            <person name="James R."/>
            <person name="Johnson C."/>
            <person name="Johnson D."/>
            <person name="Joy A."/>
            <person name="Kay M."/>
            <person name="Kershaw J.K."/>
            <person name="Kibukawa M."/>
            <person name="Kimberley A.M."/>
            <person name="King A."/>
            <person name="Knights A.J."/>
            <person name="Lad H."/>
            <person name="Laird G."/>
            <person name="Lawlor S."/>
            <person name="Leongamornlert D.A."/>
            <person name="Lloyd D.M."/>
            <person name="Loveland J."/>
            <person name="Lovell J."/>
            <person name="Lush M.J."/>
            <person name="Lyne R."/>
            <person name="Martin S."/>
            <person name="Mashreghi-Mohammadi M."/>
            <person name="Matthews L."/>
            <person name="Matthews N.S.W."/>
            <person name="McLaren S."/>
            <person name="Milne S."/>
            <person name="Mistry S."/>
            <person name="Moore M.J.F."/>
            <person name="Nickerson T."/>
            <person name="O'Dell C.N."/>
            <person name="Oliver K."/>
            <person name="Palmeiri A."/>
            <person name="Palmer S.A."/>
            <person name="Parker A."/>
            <person name="Patel D."/>
            <person name="Pearce A.V."/>
            <person name="Peck A.I."/>
            <person name="Pelan S."/>
            <person name="Phelps K."/>
            <person name="Phillimore B.J."/>
            <person name="Plumb R."/>
            <person name="Rajan J."/>
            <person name="Raymond C."/>
            <person name="Rouse G."/>
            <person name="Saenphimmachak C."/>
            <person name="Sehra H.K."/>
            <person name="Sheridan E."/>
            <person name="Shownkeen R."/>
            <person name="Sims S."/>
            <person name="Skuce C.D."/>
            <person name="Smith M."/>
            <person name="Steward C."/>
            <person name="Subramanian S."/>
            <person name="Sycamore N."/>
            <person name="Tracey A."/>
            <person name="Tromans A."/>
            <person name="Van Helmond Z."/>
            <person name="Wall M."/>
            <person name="Wallis J.M."/>
            <person name="White S."/>
            <person name="Whitehead S.L."/>
            <person name="Wilkinson J.E."/>
            <person name="Willey D.L."/>
            <person name="Williams H."/>
            <person name="Wilming L."/>
            <person name="Wray P.W."/>
            <person name="Wu Z."/>
            <person name="Coulson A."/>
            <person name="Vaudin M."/>
            <person name="Sulston J.E."/>
            <person name="Durbin R.M."/>
            <person name="Hubbard T."/>
            <person name="Wooster R."/>
            <person name="Dunham I."/>
            <person name="Carter N.P."/>
            <person name="McVean G."/>
            <person name="Ross M.T."/>
            <person name="Harrow J."/>
            <person name="Olson M.V."/>
            <person name="Beck S."/>
            <person name="Rogers J."/>
            <person name="Bentley D.R."/>
        </authorList>
    </citation>
    <scope>NUCLEOTIDE SEQUENCE [LARGE SCALE GENOMIC DNA]</scope>
</reference>
<reference key="12">
    <citation type="submission" date="2005-09" db="EMBL/GenBank/DDBJ databases">
        <authorList>
            <person name="Mural R.J."/>
            <person name="Istrail S."/>
            <person name="Sutton G.G."/>
            <person name="Florea L."/>
            <person name="Halpern A.L."/>
            <person name="Mobarry C.M."/>
            <person name="Lippert R."/>
            <person name="Walenz B."/>
            <person name="Shatkay H."/>
            <person name="Dew I."/>
            <person name="Miller J.R."/>
            <person name="Flanigan M.J."/>
            <person name="Edwards N.J."/>
            <person name="Bolanos R."/>
            <person name="Fasulo D."/>
            <person name="Halldorsson B.V."/>
            <person name="Hannenhalli S."/>
            <person name="Turner R."/>
            <person name="Yooseph S."/>
            <person name="Lu F."/>
            <person name="Nusskern D.R."/>
            <person name="Shue B.C."/>
            <person name="Zheng X.H."/>
            <person name="Zhong F."/>
            <person name="Delcher A.L."/>
            <person name="Huson D.H."/>
            <person name="Kravitz S.A."/>
            <person name="Mouchard L."/>
            <person name="Reinert K."/>
            <person name="Remington K.A."/>
            <person name="Clark A.G."/>
            <person name="Waterman M.S."/>
            <person name="Eichler E.E."/>
            <person name="Adams M.D."/>
            <person name="Hunkapiller M.W."/>
            <person name="Myers E.W."/>
            <person name="Venter J.C."/>
        </authorList>
    </citation>
    <scope>NUCLEOTIDE SEQUENCE [LARGE SCALE GENOMIC DNA]</scope>
</reference>
<reference key="13">
    <citation type="journal article" date="2004" name="Genome Res.">
        <title>The status, quality, and expansion of the NIH full-length cDNA project: the Mammalian Gene Collection (MGC).</title>
        <authorList>
            <consortium name="The MGC Project Team"/>
        </authorList>
    </citation>
    <scope>NUCLEOTIDE SEQUENCE [LARGE SCALE MRNA] (ISOFORM D)</scope>
    <source>
        <tissue>Testis</tissue>
    </source>
</reference>
<reference key="14">
    <citation type="journal article" date="2000" name="J. Infect. Dis.">
        <title>Analysis of measles virus binding sites of the CD46 gene in patients with subacute sclerosing panencephalitis.</title>
        <authorList>
            <person name="Kusuhara K."/>
            <person name="Sasaki Y."/>
            <person name="Nakao F."/>
            <person name="Ihara K."/>
            <person name="Hattori H."/>
            <person name="Yamashita S."/>
            <person name="Nihei K."/>
            <person name="Koide N."/>
            <person name="Aiba H."/>
            <person name="Takeshita K."/>
            <person name="Hara T."/>
        </authorList>
    </citation>
    <scope>NUCLEOTIDE SEQUENCE [MRNA] OF 1-158</scope>
    <scope>VARIANTS PHE-13 AND GLN-59</scope>
</reference>
<reference key="15">
    <citation type="journal article" date="1993" name="J. Immunol.">
        <title>Characterization of the promoter region of the membrane cofactor protein (CD46) gene of the human complement system and comparison to a membrane cofactor protein-like genetic element.</title>
        <authorList>
            <person name="Cui W."/>
            <person name="Hourcade D."/>
            <person name="Post T.W."/>
            <person name="Greenlund A.C."/>
            <person name="Atkinson J.P."/>
            <person name="Kumar V."/>
        </authorList>
    </citation>
    <scope>NUCLEOTIDE SEQUENCE [GENOMIC DNA] OF 1-34</scope>
</reference>
<reference key="16">
    <citation type="journal article" date="1992" name="J. Pharmacobio-Dyn.">
        <title>Homology of an acrosome-reacted sperm-specific antigen to CD46.</title>
        <authorList>
            <person name="Okabe M."/>
            <person name="Ying X."/>
            <person name="Nagira M."/>
            <person name="Ikawa M."/>
            <person name="Kohama Y."/>
            <person name="Mimura T."/>
            <person name="Tanaka K."/>
        </authorList>
    </citation>
    <scope>PROTEIN SEQUENCE OF 35-60</scope>
    <source>
        <tissue>Sperm</tissue>
    </source>
</reference>
<reference key="17">
    <citation type="journal article" date="1990" name="Immunogenetics">
        <title>Human non-lineage antigen, CD46 (HuLy-m5): purification and partial sequencing demonstrates structural homology with complement-regulating glycoproteins.</title>
        <authorList>
            <person name="Purcell D.F."/>
            <person name="Deacon N.J."/>
            <person name="Andrew S.M."/>
            <person name="McKenzie I.F."/>
        </authorList>
    </citation>
    <scope>PROTEIN SEQUENCE OF 35-58</scope>
</reference>
<reference key="18">
    <citation type="journal article" date="1993" name="J. Virol.">
        <title>Human membrane cofactor protein (CD46) acts as a cellular receptor for measles virus.</title>
        <authorList>
            <person name="Naniche D."/>
            <person name="Varior-Krishnan G."/>
            <person name="Cervoni F."/>
            <person name="Wild T.F."/>
            <person name="Rossi B."/>
            <person name="Rabourdin-Combe C."/>
            <person name="Gerlier D."/>
        </authorList>
    </citation>
    <scope>PROTEIN SEQUENCE OF 35-49</scope>
    <scope>INTERACTION WITH MEASLES VIRUS (MICROBIAL INFECTION)</scope>
</reference>
<reference key="19">
    <citation type="journal article" date="1991" name="J. Immunol.">
        <title>Contribution of the repeating domains of membrane cofactor protein (CD46) of the complement system to ligand binding and cofactor activity.</title>
        <authorList>
            <person name="Adams E.M."/>
            <person name="Brown M.C."/>
            <person name="Nunge M."/>
            <person name="Krych M."/>
            <person name="Atkinson J.P."/>
        </authorList>
    </citation>
    <scope>INTERACTION WITH C3B AND C4B</scope>
</reference>
<reference key="20">
    <citation type="journal article" date="1992" name="Eur. J. Immunol.">
        <title>Tissue-specific and allelic expression of the complement regulator CD46 is controlled by alternative splicing.</title>
        <authorList>
            <person name="Russell S.M."/>
            <person name="Sparrow R.L."/>
            <person name="McKenzie I.F.C."/>
            <person name="Purcell D.F.J."/>
        </authorList>
    </citation>
    <scope>ALTERNATIVE SPLICING</scope>
</reference>
<reference key="21">
    <citation type="journal article" date="1993" name="Cell">
        <title>The human CD46 molecule is a receptor for measles virus (Edmonston strain).</title>
        <authorList>
            <person name="Doerig R.E."/>
            <person name="Marcil A."/>
            <person name="Chopra A."/>
            <person name="Richardson C.D."/>
        </authorList>
    </citation>
    <scope>INTERACTION WITH MEASLES VIRUS (MICROBIAL INFECTION)</scope>
</reference>
<reference key="22">
    <citation type="journal article" date="1995" name="Proc. Natl. Acad. Sci. U.S.A.">
        <title>Measles virus and C3 binding sites are distinct on membrane cofactor protein (CD46).</title>
        <authorList>
            <person name="Manchester M."/>
            <person name="Valsamakis A."/>
            <person name="Kaufman R."/>
            <person name="Liszewski M.K."/>
            <person name="Alvarez J."/>
            <person name="Atkinson J.P."/>
            <person name="Lublin D.M."/>
            <person name="Oldstone M.B."/>
        </authorList>
    </citation>
    <scope>INTERACTION WITH MEASLES VIRUS (MICROBIAL INFECTION)</scope>
</reference>
<reference key="23">
    <citation type="journal article" date="1995" name="Proc. Natl. Acad. Sci. U.S.A.">
        <title>Membrane cofactor protein (CD46) is a keratinocyte receptor for the M protein of the group A streptococcus.</title>
        <authorList>
            <person name="Okada N."/>
            <person name="Liszewski M.K."/>
            <person name="Atkinson J.P."/>
            <person name="Caparon M."/>
        </authorList>
    </citation>
    <scope>FUNCTION (MICROBIAL INFECTION)</scope>
    <scope>INTERACTION WITH STREPTOCOCCUS PYOGENES M PROTEIN</scope>
</reference>
<reference key="24">
    <citation type="journal article" date="1995" name="J. Virol.">
        <title>Physical association of moesin and CD46 as a receptor complex for measles virus.</title>
        <authorList>
            <person name="Schneider-Schaulies J."/>
            <person name="Dunster L.M."/>
            <person name="Schwartz-Albiez R."/>
            <person name="Krohne G."/>
            <person name="ter Meulen V."/>
        </authorList>
    </citation>
    <scope>INTERACTION WITH MSN</scope>
</reference>
<reference key="25">
    <citation type="journal article" date="1996" name="J. Virol.">
        <title>The N-glycan of the SCR 2 region is essential for membrane cofactor protein (CD46) to function as a measles virus receptor.</title>
        <authorList>
            <person name="Maisner A."/>
            <person name="Alvarez J."/>
            <person name="Liszewski M.K."/>
            <person name="Atkinson D.J."/>
            <person name="Atkinson J.P."/>
            <person name="Herrler G."/>
        </authorList>
    </citation>
    <scope>MUTAGENESIS OF ASN-83; ASN-114 AND ASN-273</scope>
</reference>
<reference key="26">
    <citation type="journal article" date="1997" name="Mol. Microbiol.">
        <title>Membrane cofactor protein (MCP or CD46) is a cellular pilus receptor for pathogenic Neisseria.</title>
        <authorList>
            <person name="Kaellstroem H."/>
            <person name="Liszewski M.K."/>
            <person name="Atkinson J.P."/>
            <person name="Jonsson A.-B."/>
        </authorList>
    </citation>
    <scope>FUNCTION (MICROBIAL INFECTION)</scope>
    <scope>INTERACTION WITH NEISSERIA TYPE IV PILI</scope>
</reference>
<reference key="27">
    <citation type="journal article" date="1998" name="J. Immunol.">
        <title>Membrane cofactor protein: importance of N- and O-glycosylation for complement regulatory function.</title>
        <authorList>
            <person name="Liszewski M.K."/>
            <person name="Leung M.K."/>
            <person name="Atkinson J.P."/>
        </authorList>
    </citation>
    <scope>MUTAGENESIS OF ASN-83; ASN-114 AND ASN-273</scope>
</reference>
<reference key="28">
    <citation type="journal article" date="1999" name="Cell">
        <title>CD46 is a cellular receptor for human herpesvirus 6.</title>
        <authorList>
            <person name="Santoro F."/>
            <person name="Kennedy P.E."/>
            <person name="Locatelli G."/>
            <person name="Malnati M.S."/>
            <person name="Berger E.A."/>
            <person name="Lusso P."/>
        </authorList>
    </citation>
    <scope>BINDING OF HUMAN HERPESVIRUS 6</scope>
</reference>
<reference key="29">
    <citation type="journal article" date="2000" name="J. Immunol.">
        <title>Membrane cofactor protein (MCP; CD46): isoform-specific tyrosine phosphorylation.</title>
        <authorList>
            <person name="Wang G."/>
            <person name="Liszewski M.K."/>
            <person name="Chan A.C."/>
            <person name="Atkinson J.P."/>
        </authorList>
    </citation>
    <scope>PHOSPHORYLATION AT TYR-384 (ISOFORM B)</scope>
    <scope>PHOSPHORYLATION AT TYR-369 (ISOFORM D)</scope>
    <scope>PHOSPHORYLATION AT TYR-354 (ISOFORM F)</scope>
    <scope>PHOSPHORYLATION AT TYR-370 (ISOFORM H)</scope>
    <scope>PHOSPHORYLATION AT TYR-355 (ISOFORM J)</scope>
    <scope>PHOSPHORYLATION AT TYR-340 (ISOFORM L)</scope>
    <scope>PHOSPHORYLATION AT TYR-321 (ISOFORM 3)</scope>
</reference>
<reference key="30">
    <citation type="journal article" date="2000" name="J. Immunol.">
        <title>CD46, a new costimulatory molecule for T cells, that induces p120CBL and LAT phosphorylation.</title>
        <authorList>
            <person name="Astier A."/>
            <person name="Trescol-Biemont M.-C."/>
            <person name="Azocar O."/>
            <person name="Lamouille B."/>
            <person name="Rabourdin-Combe C."/>
        </authorList>
    </citation>
    <scope>FUNCTION</scope>
</reference>
<reference key="31">
    <citation type="journal article" date="2000" name="Nature">
        <title>SLAM (CDw150) is a cellular receptor for measles virus.</title>
        <authorList>
            <person name="Tatsuo H."/>
            <person name="Ono N."/>
            <person name="Tanaka K."/>
            <person name="Yanagi Y."/>
        </authorList>
    </citation>
    <scope>FUNCTION (MICROBIAL INFECTION)</scope>
    <scope>INTERACTION WITH MEASLES VIRUS HEMAGGLUTININ PROTEIN (MICROBIAL INFECTION)</scope>
</reference>
<reference key="32">
    <citation type="journal article" date="2001" name="Cell. Microbiol.">
        <title>Attachment of Neisseria gonorrhoeae to the cellular pilus receptor CD46: identification of domains important for bacterial adherence.</title>
        <authorList>
            <person name="Kaellstroem H."/>
            <person name="Blackmer Gill D."/>
            <person name="Albiger B."/>
            <person name="Liszewski M.K."/>
            <person name="Atkinson J.P."/>
            <person name="Jonsson A.-B."/>
        </authorList>
    </citation>
    <scope>FUNCTION (MICROBIAL INFECTION)</scope>
    <scope>INTERACTION WITH NEISSERIA TYPE IV PILI</scope>
    <scope>MUTAGENESIS OF ASN-83; ASN-114 AND ASN-273</scope>
</reference>
<reference key="33">
    <citation type="journal article" date="2002" name="J. Biol. Chem.">
        <title>Human Herpesvirus 6 and Measles Virus employ distinct CD46 domains for receptor function.</title>
        <authorList>
            <person name="Greenstone H.L."/>
            <person name="Santoro F."/>
            <person name="Lusso P."/>
            <person name="Berger E.A."/>
        </authorList>
    </citation>
    <scope>BINDING OF HUMAN HERPESVIRUS 6</scope>
</reference>
<reference key="34">
    <citation type="journal article" date="2002" name="J. Cell Biol.">
        <title>CD46 is phosphorylated at tyrosine 354 upon infection of epithelial cells by Neisseria gonorrhoeae.</title>
        <authorList>
            <person name="Lee S.W."/>
            <person name="Bonnah R.A."/>
            <person name="Higashi D.L."/>
            <person name="Atkinson J.P."/>
            <person name="Milgram S.L."/>
            <person name="So M."/>
        </authorList>
    </citation>
    <scope>PHOSPHORYLATION (ISOFORMS B/D/F/H/J/L/3)</scope>
</reference>
<reference key="35">
    <citation type="journal article" date="2002" name="J. Immunol.">
        <title>Identification of the streptococcal M protein binding site on membrane cofactor protein (CD46).</title>
        <authorList>
            <person name="Giannakis E."/>
            <person name="Jokiranta T.S."/>
            <person name="Ormsby R.J."/>
            <person name="Duthy T.G."/>
            <person name="Male D.A."/>
            <person name="Christiansen D."/>
            <person name="Fischetti V.A."/>
            <person name="Bagley C."/>
            <person name="Loveland B.E."/>
            <person name="Gordon D.L."/>
        </authorList>
    </citation>
    <scope>FUNCTION (MICROBIAL INFECTION)</scope>
    <scope>INTERACTION WITH STREPTOCOCCUS PYOGENES M PROTEIN</scope>
</reference>
<reference key="36">
    <citation type="journal article" date="2002" name="Mol. Reprod. Dev.">
        <title>Characterization of human membrane cofactor protein (MCP; CD46) on spermatozoa.</title>
        <authorList>
            <person name="Riley R.C."/>
            <person name="Kemper C."/>
            <person name="Leung M."/>
            <person name="Atkinson J.P."/>
        </authorList>
    </citation>
    <scope>SUBCELLULAR LOCATION</scope>
    <scope>GLYCOSYLATION</scope>
</reference>
<reference key="37">
    <citation type="journal article" date="2003" name="J. Biol. Chem.">
        <title>Interaction of glycoprotein H of human herpesvirus 6 with the cellular receptor CD46.</title>
        <authorList>
            <person name="Santoro F."/>
            <person name="Greenstone H.L."/>
            <person name="Insinga A."/>
            <person name="Liszewski M.K."/>
            <person name="Atkinson J.P."/>
            <person name="Lusso P."/>
            <person name="Berger E.A."/>
        </authorList>
    </citation>
    <scope>FUNCTION (MICROBIAL INFECTION)</scope>
    <scope>INTERACTION WITH HUMAN HERPESVIRUS 6 GH PROTEIN</scope>
</reference>
<reference key="38">
    <citation type="journal article" date="2003" name="J. Exp. Med.">
        <title>Down-regulation of CD46 by piliated Neisseria gonorrhoeae.</title>
        <authorList>
            <person name="Gill D.B."/>
            <person name="Koomey M."/>
            <person name="Cannon J.G."/>
            <person name="Atkinson J.P."/>
        </authorList>
    </citation>
    <scope>SUBCELLULAR LOCATION</scope>
</reference>
<reference key="39">
    <citation type="journal article" date="2003" name="J. Virol.">
        <title>Human herpesvirus 6 variant A glycoprotein H-glycoprotein L-glycoprotein Q complex associates with human CD46.</title>
        <authorList>
            <person name="Mori Y."/>
            <person name="Yang X."/>
            <person name="Akkapaiboon P."/>
            <person name="Okuno T."/>
            <person name="Yamanishi K."/>
        </authorList>
    </citation>
    <scope>FUNCTION (MICROBIAL INFECTION)</scope>
    <scope>INTERACTION WITH HUMAN HERPESVIRUS 6 GH PROTEIN</scope>
</reference>
<reference key="40">
    <citation type="journal article" date="2003" name="J. Virol.">
        <title>Adenovirus type 11 uses CD46 as a cellular receptor.</title>
        <authorList>
            <person name="Segerman A."/>
            <person name="Atkinson J.P."/>
            <person name="Marttila M."/>
            <person name="Dennerquist V."/>
            <person name="Wadell G."/>
            <person name="Arnberg N."/>
        </authorList>
    </citation>
    <scope>FUNCTION (MICROBIAL INFECTION)</scope>
    <scope>INTERACTION WITH HUMAN ADENOVIRUS B FIBER PROTEIN</scope>
</reference>
<reference key="41">
    <citation type="journal article" date="2003" name="Lancet">
        <title>Familial haemolytic uraemic syndrome and an MCP mutation.</title>
        <authorList>
            <person name="Noris M."/>
            <person name="Brioschi S."/>
            <person name="Caprioli J."/>
            <person name="Todeschini M."/>
            <person name="Bresin E."/>
            <person name="Porrati F."/>
            <person name="Gamba S."/>
            <person name="Remuzzi G."/>
        </authorList>
    </citation>
    <scope>DISEASE</scope>
</reference>
<reference key="42">
    <citation type="journal article" date="2003" name="Nature">
        <title>Activation of human CD4+ cells with CD3 and CD46 induces a T-regulatory cell 1 phenotype.</title>
        <authorList>
            <person name="Kemper C."/>
            <person name="Chan A.C."/>
            <person name="Green J.M."/>
            <person name="Brett K.A."/>
            <person name="Murphy K.M."/>
            <person name="Atkinson J.P."/>
        </authorList>
    </citation>
    <scope>FUNCTION</scope>
</reference>
<reference key="43">
    <citation type="journal article" date="2003" name="Nat. Med.">
        <title>CD46 is a cellular receptor for group B adenoviruses.</title>
        <authorList>
            <person name="Gaggar A."/>
            <person name="Shayakhmetov D.M."/>
            <person name="Lieber A."/>
        </authorList>
    </citation>
    <scope>FUNCTION (MICROBIAL INFECTION)</scope>
    <scope>INTERACTION WITH HUMAN ADENOVIRUS B FIBER PROTEIN</scope>
    <scope>IDENTIFICATION BY MASS SPECTROMETRY</scope>
</reference>
<reference key="44">
    <citation type="journal article" date="2004" name="Eur. J. Immunol.">
        <title>Complement inhibitor membrane cofactor protein (MCP; CD46) is constitutively shed from cancer cell membranes in vesicles and converted by a metalloproteinase to a functionally active soluble form.</title>
        <authorList>
            <person name="Hakulinen J."/>
            <person name="Junnikkala S."/>
            <person name="Sorsa T."/>
            <person name="Meri S."/>
        </authorList>
    </citation>
    <scope>GLYCOSYLATION</scope>
    <scope>SUBCELLULAR LOCATION</scope>
</reference>
<reference key="45">
    <citation type="journal article" date="2004" name="J. Virol.">
        <title>Membrane cofactor protein is a receptor for adenoviruses associated with epidemic keratoconjunctivitis.</title>
        <authorList>
            <person name="Wu E."/>
            <person name="Trauger S.A."/>
            <person name="Pache L."/>
            <person name="Mullen T.-M."/>
            <person name="von Seggern D.J."/>
            <person name="Siuzdak G."/>
            <person name="Nemerow G.R."/>
        </authorList>
    </citation>
    <scope>FUNCTION (MICROBIAL INFECTION)</scope>
    <scope>INTERACTION WITH HUMAN ADENOVIRUS D TYPE 37 PIV/FIBER PROTEIN</scope>
    <scope>IDENTIFICATION BY MASS SPECTROMETRY</scope>
</reference>
<reference key="46">
    <citation type="journal article" date="2004" name="J. Virol.">
        <title>The human membrane cofactor CD46 is a receptor for species B adenovirus serotype 3.</title>
        <authorList>
            <person name="Sirena D."/>
            <person name="Lilienfeld B."/>
            <person name="Eisenhut M."/>
            <person name="Kaelin S."/>
            <person name="Boucke K."/>
            <person name="Beerli R.R."/>
            <person name="Vogt L."/>
            <person name="Ruedl C."/>
            <person name="Bachmann M.F."/>
            <person name="Greber U.F."/>
            <person name="Hemmi S."/>
        </authorList>
    </citation>
    <scope>FUNCTION (MICROBIAL INFECTION)</scope>
    <scope>INTERACTION WITH HUMAN ADENOVIRUS B TYPE 3 FIBER PROTEIN</scope>
</reference>
<reference key="47">
    <citation type="journal article" date="2005" name="J. Virol.">
        <title>Localization of regions in CD46 that interact with adenovirus.</title>
        <authorList>
            <person name="Gaggar A."/>
            <person name="Shayakhmetov D.M."/>
            <person name="Liszewski M.K."/>
            <person name="Atkinson J.P."/>
            <person name="Lieber A."/>
        </authorList>
    </citation>
    <scope>FUNCTION (MICROBIAL INFECTION)</scope>
    <scope>INTERACTION WITH HUMAN ADENOVIRUS B TYPE 35 FIBER PROTEIN</scope>
</reference>
<reference key="48">
    <citation type="journal article" date="2005" name="J. Virol.">
        <title>CD46 is a cellular receptor for all species B adenoviruses except types 3 and 7.</title>
        <authorList>
            <person name="Marttila M."/>
            <person name="Persson D."/>
            <person name="Gustafsson D."/>
            <person name="Liszewski M.K."/>
            <person name="Atkinson J.P."/>
            <person name="Wadell G."/>
            <person name="Arnberg N."/>
        </authorList>
    </citation>
    <scope>FUNCTION (MICROBIAL INFECTION)</scope>
    <scope>INTERACTION WITH HUMAN ADENOVIRUS B FIBER PROTEIN</scope>
</reference>
<reference key="49">
    <citation type="journal article" date="2014" name="J. Proteomics">
        <title>An enzyme assisted RP-RPLC approach for in-depth analysis of human liver phosphoproteome.</title>
        <authorList>
            <person name="Bian Y."/>
            <person name="Song C."/>
            <person name="Cheng K."/>
            <person name="Dong M."/>
            <person name="Wang F."/>
            <person name="Huang J."/>
            <person name="Sun D."/>
            <person name="Wang L."/>
            <person name="Ye M."/>
            <person name="Zou H."/>
        </authorList>
    </citation>
    <scope>IDENTIFICATION BY MASS SPECTROMETRY [LARGE SCALE ANALYSIS]</scope>
    <source>
        <tissue>Liver</tissue>
    </source>
</reference>
<reference key="50">
    <citation type="journal article" date="1999" name="EMBO J.">
        <title>Crystal structure of two CD46 domains reveals an extended measles virus-binding surface.</title>
        <authorList>
            <person name="Casasnovas J.M."/>
            <person name="Larvie M."/>
            <person name="Stehle T."/>
        </authorList>
    </citation>
    <scope>X-RAY CRYSTALLOGRAPHY (3.1 ANGSTROMS) OF 35-160</scope>
</reference>
<reference key="51">
    <citation type="journal article" date="2003" name="Proc. Natl. Acad. Sci. U.S.A.">
        <title>Mutations in human complement regulator, membrane cofactor protein (CD46), predispose to development of familial hemolytic uremic syndrome.</title>
        <authorList>
            <person name="Richards A."/>
            <person name="Kemp E.J."/>
            <person name="Liszewski M.K."/>
            <person name="Goodship J.A."/>
            <person name="Lampe A.K."/>
            <person name="Decorte R."/>
            <person name="Muesluemanoglu M.H."/>
            <person name="Kavukcu S."/>
            <person name="Filler G."/>
            <person name="Pirson Y."/>
            <person name="Wen L.S."/>
            <person name="Atkinson J.P."/>
            <person name="Goodship T.H.J."/>
        </authorList>
    </citation>
    <scope>CHARACTERIZATION OF VARIANTS AHUS2 PRO-240 AND 271-ASP-SER-272 DEL</scope>
</reference>
<reference evidence="53" key="52">
    <citation type="journal article" date="2010" name="Nat. Struct. Mol. Biol.">
        <title>Structure of the measles virus hemagglutinin bound to the CD46 receptor.</title>
        <authorList>
            <person name="Santiago C."/>
            <person name="Celma M.L."/>
            <person name="Stehle T."/>
            <person name="Casasnovas J.M."/>
        </authorList>
    </citation>
    <scope>X-RAY CRYSTALLOGRAPHY (3.10 ANGSTROMS) OF 35-160</scope>
    <scope>GLYCOSYLATION AT ASN-114</scope>
    <scope>FUNCTION (MICROBIAL INFECTION)</scope>
</reference>
<reference key="53">
    <citation type="journal article" date="2006" name="Blood">
        <title>Genetics of HUS: the impact of MCP, CFH, and IF mutations on clinical presentation, response to treatment, and outcome.</title>
        <authorList>
            <consortium name="The international registry of recurrent and familial HUS/TTP"/>
            <person name="Caprioli J."/>
            <person name="Noris M."/>
            <person name="Brioschi S."/>
            <person name="Pianetti G."/>
            <person name="Castelletti F."/>
            <person name="Bettinaglio P."/>
            <person name="Mele C."/>
            <person name="Bresin E."/>
            <person name="Cassis L."/>
            <person name="Gamba S."/>
            <person name="Porrati F."/>
            <person name="Bucchioni S."/>
            <person name="Monteferrante G."/>
            <person name="Fang C.J."/>
            <person name="Liszewski M.K."/>
            <person name="Kavanagh D."/>
            <person name="Atkinson J.P."/>
            <person name="Remuzzi G."/>
        </authorList>
    </citation>
    <scope>VARIANT AHUS2 TYR-35</scope>
</reference>
<reference key="54">
    <citation type="journal article" date="2006" name="Mol. Immunol.">
        <title>Insights into hemolytic uremic syndrome: segregation of three independent predisposition factors in a large, multiple affected pedigree.</title>
        <authorList>
            <person name="Esparza-Gordillo J."/>
            <person name="Jorge E.G."/>
            <person name="Garrido C.A."/>
            <person name="Carreras L."/>
            <person name="Lopez-Trascasa M."/>
            <person name="Sanchez-Corral P."/>
            <person name="de Cordoba S.R."/>
        </authorList>
    </citation>
    <scope>VARIANT AHUS2 SER-165</scope>
</reference>
<reference key="55">
    <citation type="journal article" date="2006" name="Science">
        <title>The consensus coding sequences of human breast and colorectal cancers.</title>
        <authorList>
            <person name="Sjoeblom T."/>
            <person name="Jones S."/>
            <person name="Wood L.D."/>
            <person name="Parsons D.W."/>
            <person name="Lin J."/>
            <person name="Barber T.D."/>
            <person name="Mandelker D."/>
            <person name="Leary R.J."/>
            <person name="Ptak J."/>
            <person name="Silliman N."/>
            <person name="Szabo S."/>
            <person name="Buckhaults P."/>
            <person name="Farrell C."/>
            <person name="Meeh P."/>
            <person name="Markowitz S.D."/>
            <person name="Willis J."/>
            <person name="Dawson D."/>
            <person name="Willson J.K.V."/>
            <person name="Gazdar A.F."/>
            <person name="Hartigan J."/>
            <person name="Wu L."/>
            <person name="Liu C."/>
            <person name="Parmigiani G."/>
            <person name="Park B.H."/>
            <person name="Bachman K.E."/>
            <person name="Papadopoulos N."/>
            <person name="Vogelstein B."/>
            <person name="Kinzler K.W."/>
            <person name="Velculescu V.E."/>
        </authorList>
    </citation>
    <scope>VARIANTS [LARGE SCALE ANALYSIS] TYR-228 AND VAL-353</scope>
</reference>
<reference key="56">
    <citation type="journal article" date="2010" name="Hum. Mutat.">
        <title>Mutations in alternative pathway complement proteins in American patients with atypical hemolytic uremic syndrome.</title>
        <authorList>
            <person name="Maga T.K."/>
            <person name="Nishimura C.J."/>
            <person name="Weaver A.E."/>
            <person name="Frees K.L."/>
            <person name="Smith R.J.H."/>
        </authorList>
    </citation>
    <scope>VARIANTS AHUS2 CYS-216 AND ARG-231</scope>
</reference>
<comment type="function">
    <text evidence="6 11">Acts as a cofactor for complement factor I, a serine protease which protects autologous cells against complement-mediated injury by cleaving C3b and C4b deposited on host tissue. May be involved in the fusion of the spermatozoa with the oocyte during fertilization. Also acts as a costimulatory factor for T-cells which induces the differentiation of CD4+ into T-regulatory 1 cells. T-regulatory 1 cells suppress immune responses by secreting interleukin-10, and therefore are thought to prevent autoimmunity.</text>
</comment>
<comment type="function">
    <text>(Microbial infection) A number of viral and bacterial pathogens seem to bind MCP in order to exploit its immune regulation property and directly induce an immunosuppressive phenotype in T-cells.</text>
</comment>
<comment type="function">
    <text evidence="14 16 19 20 22 23">(Microbial infection) Acts as a receptor for Adenovirus subgroup B2 and Ad3.</text>
</comment>
<comment type="function">
    <text evidence="7 28 32 35 36">(Microbial infection) Acts as a receptor for cultured Measles virus.</text>
</comment>
<comment type="function">
    <text evidence="12 13">(Microbial infection) Acts as a receptor for Herpesvirus 6/HHV-6.</text>
</comment>
<comment type="function">
    <text>(Microbial infection) May act as a receptor for pathogenic bacteria Neisseria and Streptococcus pyogenes (PubMed:11260136, PubMed:11971006, PubMed:7708671, PubMed:9379894).</text>
</comment>
<comment type="subunit">
    <text evidence="27 31 34">Interacts with C3b (PubMed:1717583, PubMed:3260937). Interacts with C4b (PubMed:1717583). Interacts with moesin/MSN (PubMed:7884872).</text>
</comment>
<comment type="subunit">
    <text evidence="7 28">(Microbial infection) Interacts (via N-terminus) with measles virus H protein; this interaction allows attachment and viral entry of vaccine and laboratory-adapted strains.</text>
</comment>
<comment type="subunit">
    <text evidence="12 13">(Microbial infection) Interacts with human herpesvirus 6 GH protein (PubMed:12663806, PubMed:12724329).</text>
</comment>
<comment type="subunit">
    <text evidence="14 16 19 20 22 23">(Microbial infection) Interacts with human adenovirus B/D fiber protein (PubMed:12915534, PubMed:14566335, PubMed:15047806, PubMed:15078926, PubMed:15919905, PubMed:16254377).</text>
</comment>
<comment type="subunit">
    <text evidence="8 9 33 38">(Microbial infection) Binds to Streptococcus pyogenes M protein and to type IV pili from Neisseria (PubMed:11260136, PubMed:11971006, PubMed:7708671, PubMed:9379894).</text>
</comment>
<comment type="interaction">
    <interactant intactId="EBI-2623451">
        <id>P15529</id>
    </interactant>
    <interactant intactId="EBI-905851">
        <id>P01024</id>
        <label>C3</label>
    </interactant>
    <organismsDiffer>false</organismsDiffer>
    <experiments>2</experiments>
</comment>
<comment type="interaction">
    <interactant intactId="EBI-2623451">
        <id>P15529</id>
    </interactant>
    <interactant intactId="EBI-2847071">
        <id>P78504</id>
        <label>JAG1</label>
    </interactant>
    <organismsDiffer>false</organismsDiffer>
    <experiments>5</experiments>
</comment>
<comment type="interaction">
    <interactant intactId="EBI-13046140">
        <id>P15529-3</id>
    </interactant>
    <interactant intactId="EBI-3925742">
        <id>Q8TD06</id>
        <label>AGR3</label>
    </interactant>
    <organismsDiffer>false</organismsDiffer>
    <experiments>3</experiments>
</comment>
<comment type="interaction">
    <interactant intactId="EBI-13046140">
        <id>P15529-3</id>
    </interactant>
    <interactant intactId="EBI-12109402">
        <id>Q86W74-2</id>
        <label>ANKRD46</label>
    </interactant>
    <organismsDiffer>false</organismsDiffer>
    <experiments>3</experiments>
</comment>
<comment type="interaction">
    <interactant intactId="EBI-13046140">
        <id>P15529-3</id>
    </interactant>
    <interactant intactId="EBI-2927498">
        <id>O60883</id>
        <label>GPR37L1</label>
    </interactant>
    <organismsDiffer>false</organismsDiffer>
    <experiments>3</experiments>
</comment>
<comment type="interaction">
    <interactant intactId="EBI-13046140">
        <id>P15529-3</id>
    </interactant>
    <interactant intactId="EBI-17236143">
        <id>Q12837</id>
        <label>POU4F2</label>
    </interactant>
    <organismsDiffer>false</organismsDiffer>
    <experiments>3</experiments>
</comment>
<comment type="interaction">
    <interactant intactId="EBI-13046140">
        <id>P15529-3</id>
    </interactant>
    <interactant intactId="EBI-723716">
        <id>Q9UEU0</id>
        <label>VTI1B</label>
    </interactant>
    <organismsDiffer>false</organismsDiffer>
    <experiments>3</experiments>
</comment>
<comment type="subcellular location">
    <subcellularLocation>
        <location evidence="10 17 21">Cytoplasmic vesicle</location>
        <location evidence="10 17 21">Secretory vesicle</location>
        <location evidence="10 17 21">Acrosome inner membrane</location>
        <topology evidence="10 17 21">Single-pass type I membrane protein</topology>
    </subcellularLocation>
    <text>Inner acrosomal membrane of spermatozoa. Internalized upon binding of Measles virus, Herpesvirus 6 or Neisseria gonorrhoeae, which results in an increased susceptibility of infected cells to complement-mediated injury. In cancer cells or cells infected by Neisseria, shedding leads to a soluble peptide.</text>
</comment>
<comment type="alternative products">
    <event type="alternative splicing"/>
    <isoform>
        <id>P15529-1</id>
        <name>A</name>
        <name>no del</name>
        <name>ABC1</name>
        <sequence type="displayed"/>
    </isoform>
    <isoform>
        <id>P15529-2</id>
        <name>B</name>
        <name>del 13</name>
        <name>ABC2</name>
        <sequence type="described" ref="VSP_001204"/>
    </isoform>
    <isoform>
        <id>P15529-11</id>
        <name>C</name>
        <name>del 7</name>
        <name>BC1</name>
        <sequence type="described" ref="VSP_009174"/>
    </isoform>
    <isoform>
        <id>P15529-3</id>
        <name>D</name>
        <name>del 7-13</name>
        <name>BC2</name>
        <sequence type="described" ref="VSP_009174 VSP_001204"/>
    </isoform>
    <isoform>
        <id>P15529-12</id>
        <name>E</name>
        <name>del 7-8</name>
        <name>C1</name>
        <sequence type="described" ref="VSP_009175"/>
    </isoform>
    <isoform>
        <id>P15529-4</id>
        <name>F</name>
        <name>del 7-8-13</name>
        <name>C2</name>
        <sequence type="described" ref="VSP_009175 VSP_001204"/>
    </isoform>
    <isoform>
        <id>P15529-13</id>
        <name>G</name>
        <name>del 9</name>
        <sequence type="described" ref="VSP_009177"/>
    </isoform>
    <isoform>
        <id>P15529-5</id>
        <name>H</name>
        <name>del 9-13</name>
        <sequence type="described" ref="VSP_009177 VSP_001204"/>
    </isoform>
    <isoform>
        <id>P15529-14</id>
        <name>I</name>
        <name>del 7-9</name>
        <sequence type="described" ref="VSP_009174 VSP_009177"/>
    </isoform>
    <isoform>
        <id>P15529-6</id>
        <name>J</name>
        <name>del 7-9-13</name>
        <sequence type="described" ref="VSP_009174 VSP_009177 VSP_001204"/>
    </isoform>
    <isoform>
        <id>P15529-15</id>
        <name>K</name>
        <name>del 7-8-9</name>
        <sequence type="described" ref="VSP_009176"/>
    </isoform>
    <isoform>
        <id>P15529-7</id>
        <name>L</name>
        <name>del 7-8-9-13</name>
        <sequence type="described" ref="VSP_009176 VSP_001204"/>
    </isoform>
    <isoform>
        <id>P15529-8</id>
        <name>M</name>
        <name>del 7-12a-13</name>
        <sequence type="described" ref="VSP_009174 VSP_001202 VSP_001203"/>
    </isoform>
    <isoform>
        <id>P15529-9</id>
        <name>N</name>
        <name>del 7-8-12-13</name>
        <sequence type="described" ref="VSP_009175 VSP_009178"/>
    </isoform>
    <isoform>
        <id>P15529-10</id>
        <name>2</name>
        <sequence type="described" ref="VSP_001201"/>
    </isoform>
    <isoform>
        <id>P15529-16</id>
        <name>3</name>
        <sequence type="described" ref="VSP_019005 VSP_019006 VSP_001204"/>
    </isoform>
    <text>Additional isoforms seem to exist. The complete sequences of the isoforms are not known. Isoforms are classified as alpha (isoform C and isoform D), beta (isoform E and isoform F), gamma (isoform A and isoform B) and delta (isoform N). Isoforms gamma are preferentially expressed in EBV-B cells and leukemic cells. Isoforms alpha (66 kDa) and isoforms beta (56 kDa) are found in all tissues except sperm. Isoform delta is expressed in spermatozoa. The exon 9 is specifically deleted in some placentae isoforms. All tissues differentially splice exon 13.</text>
</comment>
<comment type="tissue specificity">
    <text>Expressed by all cells except erythrocytes.</text>
</comment>
<comment type="domain">
    <text>Sushi domains 1 and 2 are required for interaction with human adenovirus B PIV/FIBER protein and with Measles virus H protein. Sushi domains 2 and 3 are required for Herpesvirus 6 binding. Sushi domain 3 is required for Neisseria binding. Sushi domains 3 and 4 are required for interaction with Streptococcus pyogenes M protein and are the most important for interaction with C3b and C4b.</text>
</comment>
<comment type="PTM">
    <text>N-glycosylated on Asn-83; Asn-114 and Asn-273 in most tissues, but probably less N-glycosylated in testis. N-glycosylation on Asn-114 and Asn-273 is required for cytoprotective function. N-glycosylation on Asn-114 is required for Measles virus binding. N-glycosylation on Asn-273 is required for Neisseria binding. N-glycosylation is not required for human adenovirus binding.</text>
</comment>
<comment type="PTM">
    <text>Extensively O-glycosylated in the Ser/Thr-rich domain. O-glycosylation is required for Neisseria binding but not for Measles virus or human adenovirus binding.</text>
</comment>
<comment type="PTM">
    <text>In epithelial cells, isoforms B/D/F/H/J/L/3 are phosphorylated by YES1 in response to infection by Neisseria gonorrhoeae; which promotes infectivity. In T-cells, these isoforms may be phosphorylated by LCK.</text>
</comment>
<comment type="disease" evidence="15 24 25 29">
    <disease id="DI-02597">
        <name>Hemolytic uremic syndrome, atypical, 2</name>
        <acronym>AHUS2</acronym>
        <description>An atypical form of hemolytic uremic syndrome. It is a complex genetic disease characterized by microangiopathic hemolytic anemia, thrombocytopenia, renal failure and absence of episodes of enterocolitis and diarrhea. In contrast to typical hemolytic uremic syndrome, atypical forms have a poorer prognosis, with higher death rates and frequent progression to end-stage renal disease.</description>
        <dbReference type="MIM" id="612922"/>
    </disease>
    <text>Disease susceptibility is associated with variants affecting the gene represented in this entry. Other genes may play a role in modifying the phenotype. Patients with CD46 mutations seem to have an overall better prognosis compared to patients carrying CFH mutations.</text>
</comment>
<evidence type="ECO:0000255" key="1"/>
<evidence type="ECO:0000255" key="2">
    <source>
        <dbReference type="PROSITE-ProRule" id="PRU00302"/>
    </source>
</evidence>
<evidence type="ECO:0000256" key="3">
    <source>
        <dbReference type="SAM" id="MobiDB-lite"/>
    </source>
</evidence>
<evidence type="ECO:0000269" key="4">
    <source>
    </source>
</evidence>
<evidence type="ECO:0000269" key="5">
    <source>
    </source>
</evidence>
<evidence type="ECO:0000269" key="6">
    <source>
    </source>
</evidence>
<evidence type="ECO:0000269" key="7">
    <source>
    </source>
</evidence>
<evidence type="ECO:0000269" key="8">
    <source>
    </source>
</evidence>
<evidence type="ECO:0000269" key="9">
    <source>
    </source>
</evidence>
<evidence type="ECO:0000269" key="10">
    <source>
    </source>
</evidence>
<evidence type="ECO:0000269" key="11">
    <source>
    </source>
</evidence>
<evidence type="ECO:0000269" key="12">
    <source>
    </source>
</evidence>
<evidence type="ECO:0000269" key="13">
    <source>
    </source>
</evidence>
<evidence type="ECO:0000269" key="14">
    <source>
    </source>
</evidence>
<evidence type="ECO:0000269" key="15">
    <source>
    </source>
</evidence>
<evidence type="ECO:0000269" key="16">
    <source>
    </source>
</evidence>
<evidence type="ECO:0000269" key="17">
    <source>
    </source>
</evidence>
<evidence type="ECO:0000269" key="18">
    <source>
    </source>
</evidence>
<evidence type="ECO:0000269" key="19">
    <source>
    </source>
</evidence>
<evidence type="ECO:0000269" key="20">
    <source>
    </source>
</evidence>
<evidence type="ECO:0000269" key="21">
    <source>
    </source>
</evidence>
<evidence type="ECO:0000269" key="22">
    <source>
    </source>
</evidence>
<evidence type="ECO:0000269" key="23">
    <source>
    </source>
</evidence>
<evidence type="ECO:0000269" key="24">
    <source>
    </source>
</evidence>
<evidence type="ECO:0000269" key="25">
    <source>
    </source>
</evidence>
<evidence type="ECO:0000269" key="26">
    <source>
    </source>
</evidence>
<evidence type="ECO:0000269" key="27">
    <source>
    </source>
</evidence>
<evidence type="ECO:0000269" key="28">
    <source>
    </source>
</evidence>
<evidence type="ECO:0000269" key="29">
    <source>
    </source>
</evidence>
<evidence type="ECO:0000269" key="30">
    <source>
    </source>
</evidence>
<evidence type="ECO:0000269" key="31">
    <source>
    </source>
</evidence>
<evidence type="ECO:0000269" key="32">
    <source>
    </source>
</evidence>
<evidence type="ECO:0000269" key="33">
    <source>
    </source>
</evidence>
<evidence type="ECO:0000269" key="34">
    <source>
    </source>
</evidence>
<evidence type="ECO:0000269" key="35">
    <source>
    </source>
</evidence>
<evidence type="ECO:0000269" key="36">
    <source>
    </source>
</evidence>
<evidence type="ECO:0000269" key="37">
    <source>
    </source>
</evidence>
<evidence type="ECO:0000269" key="38">
    <source>
    </source>
</evidence>
<evidence type="ECO:0000269" key="39">
    <source>
    </source>
</evidence>
<evidence type="ECO:0000269" key="40">
    <source ref="10"/>
</evidence>
<evidence type="ECO:0000269" key="41">
    <source ref="9"/>
</evidence>
<evidence type="ECO:0000303" key="42">
    <source>
    </source>
</evidence>
<evidence type="ECO:0000303" key="43">
    <source>
    </source>
</evidence>
<evidence type="ECO:0000303" key="44">
    <source>
    </source>
</evidence>
<evidence type="ECO:0000303" key="45">
    <source>
    </source>
</evidence>
<evidence type="ECO:0000303" key="46">
    <source>
    </source>
</evidence>
<evidence type="ECO:0000303" key="47">
    <source>
    </source>
</evidence>
<evidence type="ECO:0000303" key="48">
    <source>
    </source>
</evidence>
<evidence type="ECO:0000303" key="49">
    <source>
    </source>
</evidence>
<evidence type="ECO:0000303" key="50">
    <source ref="6"/>
</evidence>
<evidence type="ECO:0000303" key="51">
    <source ref="9"/>
</evidence>
<evidence type="ECO:0000305" key="52"/>
<evidence type="ECO:0007744" key="53">
    <source>
        <dbReference type="PDB" id="3INB"/>
    </source>
</evidence>
<evidence type="ECO:0007744" key="54">
    <source>
        <dbReference type="PDB" id="3L89"/>
    </source>
</evidence>
<evidence type="ECO:0007829" key="55">
    <source>
        <dbReference type="PDB" id="3O8E"/>
    </source>
</evidence>
<evidence type="ECO:0007829" key="56">
    <source>
        <dbReference type="PDB" id="5FO8"/>
    </source>
</evidence>
<evidence type="ECO:0007829" key="57">
    <source>
        <dbReference type="PDB" id="8QK3"/>
    </source>
</evidence>
<sequence>MEPPGRRECPFPSWRFPGLLLAAMVLLLYSFSDACEEPPTFEAMELIGKPKPYYEIGERVDYKCKKGYFYIPPLATHTICDRNHTWLPVSDDACYRETCPYIRDPLNGQAVPANGTYEFGYQMHFICNEGYYLIGEEILYCELKGSVAIWSGKPPICEKVLCTPPPKIKNGKHTFSEVEVFEYLDAVTYSCDPAPGPDPFSLIGESTIYCGDNSVWSRAAPECKVVKCRFPVVENGKQISGFGKKFYYKATVMFECDKGFYLDGSDTIVCDSNSTWDPPVPKCLKVLPPSSTKPPALSHSVSTSSTTKSPASSASGPRPTYKPPVSNYPGYPKPEEGILDSLDVWVIAVIVIAIVVGVAVICVVPYRYLQRRKKKGTYLTDETHREVKFTSL</sequence>
<name>MCP_HUMAN</name>
<dbReference type="EMBL" id="Y00651">
    <property type="protein sequence ID" value="CAA68675.1"/>
    <property type="molecule type" value="mRNA"/>
</dbReference>
<dbReference type="EMBL" id="M58050">
    <property type="protein sequence ID" value="AAA62833.1"/>
    <property type="molecule type" value="mRNA"/>
</dbReference>
<dbReference type="EMBL" id="X59405">
    <property type="status" value="NOT_ANNOTATED_CDS"/>
    <property type="molecule type" value="mRNA"/>
</dbReference>
<dbReference type="EMBL" id="X59406">
    <property type="status" value="NOT_ANNOTATED_CDS"/>
    <property type="molecule type" value="mRNA"/>
</dbReference>
<dbReference type="EMBL" id="X59407">
    <property type="status" value="NOT_ANNOTATED_CDS"/>
    <property type="molecule type" value="mRNA"/>
</dbReference>
<dbReference type="EMBL" id="X59408">
    <property type="status" value="NOT_ANNOTATED_CDS"/>
    <property type="molecule type" value="mRNA"/>
</dbReference>
<dbReference type="EMBL" id="X59409">
    <property type="status" value="NOT_ANNOTATED_CDS"/>
    <property type="molecule type" value="mRNA"/>
</dbReference>
<dbReference type="EMBL" id="X59410">
    <property type="status" value="NOT_ANNOTATED_CDS"/>
    <property type="molecule type" value="mRNA"/>
</dbReference>
<dbReference type="EMBL" id="S51940">
    <property type="protein sequence ID" value="AAB24802.1"/>
    <property type="molecule type" value="mRNA"/>
</dbReference>
<dbReference type="EMBL" id="D84105">
    <property type="protein sequence ID" value="BAA12224.1"/>
    <property type="molecule type" value="mRNA"/>
</dbReference>
<dbReference type="EMBL" id="EF076055">
    <property type="protein sequence ID" value="ABK81635.1"/>
    <property type="molecule type" value="mRNA"/>
</dbReference>
<dbReference type="EMBL" id="EF076056">
    <property type="protein sequence ID" value="ABK81636.1"/>
    <property type="molecule type" value="mRNA"/>
</dbReference>
<dbReference type="EMBL" id="EF076057">
    <property type="protein sequence ID" value="ABK81637.1"/>
    <property type="molecule type" value="mRNA"/>
</dbReference>
<dbReference type="EMBL" id="EF076058">
    <property type="protein sequence ID" value="ABK81638.1"/>
    <property type="molecule type" value="mRNA"/>
</dbReference>
<dbReference type="EMBL" id="AK291227">
    <property type="protein sequence ID" value="BAF83916.1"/>
    <property type="molecule type" value="mRNA"/>
</dbReference>
<dbReference type="EMBL" id="BX537451">
    <property type="protein sequence ID" value="CAD97694.1"/>
    <property type="molecule type" value="mRNA"/>
</dbReference>
<dbReference type="EMBL" id="BX640613">
    <property type="protein sequence ID" value="CAE45719.1"/>
    <property type="molecule type" value="mRNA"/>
</dbReference>
<dbReference type="EMBL" id="BX649050">
    <property type="protein sequence ID" value="CAI45983.1"/>
    <property type="molecule type" value="mRNA"/>
</dbReference>
<dbReference type="EMBL" id="AK222822">
    <property type="protein sequence ID" value="BAD96542.1"/>
    <property type="molecule type" value="mRNA"/>
</dbReference>
<dbReference type="EMBL" id="AY916779">
    <property type="protein sequence ID" value="AAW82433.1"/>
    <property type="molecule type" value="Genomic_DNA"/>
</dbReference>
<dbReference type="EMBL" id="AL035209">
    <property type="status" value="NOT_ANNOTATED_CDS"/>
    <property type="molecule type" value="Genomic_DNA"/>
</dbReference>
<dbReference type="EMBL" id="AL365178">
    <property type="status" value="NOT_ANNOTATED_CDS"/>
    <property type="molecule type" value="Genomic_DNA"/>
</dbReference>
<dbReference type="EMBL" id="CH471100">
    <property type="protein sequence ID" value="EAW93465.1"/>
    <property type="molecule type" value="Genomic_DNA"/>
</dbReference>
<dbReference type="EMBL" id="CH471100">
    <property type="protein sequence ID" value="EAW93470.1"/>
    <property type="molecule type" value="Genomic_DNA"/>
</dbReference>
<dbReference type="EMBL" id="CH471100">
    <property type="protein sequence ID" value="EAW93476.1"/>
    <property type="molecule type" value="Genomic_DNA"/>
</dbReference>
<dbReference type="EMBL" id="BC030594">
    <property type="protein sequence ID" value="AAH30594.1"/>
    <property type="molecule type" value="mRNA"/>
</dbReference>
<dbReference type="EMBL" id="AF209712">
    <property type="protein sequence ID" value="AAF73844.1"/>
    <property type="molecule type" value="mRNA"/>
</dbReference>
<dbReference type="EMBL" id="AF209713">
    <property type="protein sequence ID" value="AAF73845.1"/>
    <property type="molecule type" value="mRNA"/>
</dbReference>
<dbReference type="EMBL" id="AF209714">
    <property type="protein sequence ID" value="AAF73846.1"/>
    <property type="molecule type" value="mRNA"/>
</dbReference>
<dbReference type="EMBL" id="S65879">
    <property type="protein sequence ID" value="AAD13968.1"/>
    <property type="molecule type" value="Genomic_DNA"/>
</dbReference>
<dbReference type="CCDS" id="CCDS1479.1">
    <molecule id="P15529-9"/>
</dbReference>
<dbReference type="CCDS" id="CCDS1480.1">
    <molecule id="P15529-3"/>
</dbReference>
<dbReference type="CCDS" id="CCDS1481.1">
    <molecule id="P15529-4"/>
</dbReference>
<dbReference type="CCDS" id="CCDS1482.1">
    <molecule id="P15529-2"/>
</dbReference>
<dbReference type="CCDS" id="CCDS1484.1">
    <molecule id="P15529-7"/>
</dbReference>
<dbReference type="CCDS" id="CCDS1485.1">
    <molecule id="P15529-1"/>
</dbReference>
<dbReference type="CCDS" id="CCDS31008.1">
    <molecule id="P15529-11"/>
</dbReference>
<dbReference type="CCDS" id="CCDS31009.1">
    <molecule id="P15529-12"/>
</dbReference>
<dbReference type="CCDS" id="CCDS86048.1">
    <molecule id="P15529-6"/>
</dbReference>
<dbReference type="PIR" id="G02913">
    <property type="entry name" value="G02913"/>
</dbReference>
<dbReference type="PIR" id="I54479">
    <property type="entry name" value="I54479"/>
</dbReference>
<dbReference type="PIR" id="I57998">
    <property type="entry name" value="I57998"/>
</dbReference>
<dbReference type="PIR" id="S01896">
    <property type="entry name" value="S01896"/>
</dbReference>
<dbReference type="RefSeq" id="NP_002380.3">
    <molecule id="P15529-1"/>
    <property type="nucleotide sequence ID" value="NM_002389.4"/>
</dbReference>
<dbReference type="RefSeq" id="NP_722548.1">
    <molecule id="P15529-3"/>
    <property type="nucleotide sequence ID" value="NM_153826.4"/>
</dbReference>
<dbReference type="RefSeq" id="NP_758860.1">
    <molecule id="P15529-9"/>
    <property type="nucleotide sequence ID" value="NM_172350.3"/>
</dbReference>
<dbReference type="RefSeq" id="NP_758861.1">
    <molecule id="P15529-11"/>
    <property type="nucleotide sequence ID" value="NM_172351.3"/>
</dbReference>
<dbReference type="RefSeq" id="NP_758862.1">
    <molecule id="P15529-12"/>
    <property type="nucleotide sequence ID" value="NM_172352.3"/>
</dbReference>
<dbReference type="RefSeq" id="NP_758863.1">
    <molecule id="P15529-4"/>
    <property type="nucleotide sequence ID" value="NM_172353.3"/>
</dbReference>
<dbReference type="RefSeq" id="NP_758865.1">
    <molecule id="P15529-14"/>
    <property type="nucleotide sequence ID" value="NM_172355.3"/>
</dbReference>
<dbReference type="RefSeq" id="NP_758866.1">
    <molecule id="P15529-6"/>
    <property type="nucleotide sequence ID" value="NM_172356.3"/>
</dbReference>
<dbReference type="RefSeq" id="NP_758867.1">
    <molecule id="P15529-15"/>
    <property type="nucleotide sequence ID" value="NM_172357.3"/>
</dbReference>
<dbReference type="RefSeq" id="NP_758869.1">
    <molecule id="P15529-2"/>
    <property type="nucleotide sequence ID" value="NM_172359.3"/>
</dbReference>
<dbReference type="RefSeq" id="NP_758871.1">
    <molecule id="P15529-7"/>
    <property type="nucleotide sequence ID" value="NM_172361.3"/>
</dbReference>
<dbReference type="RefSeq" id="XP_011507865.1">
    <molecule id="P15529-5"/>
    <property type="nucleotide sequence ID" value="XM_011509563.3"/>
</dbReference>
<dbReference type="RefSeq" id="XP_011507866.1">
    <property type="nucleotide sequence ID" value="XM_011509564.1"/>
</dbReference>
<dbReference type="RefSeq" id="XP_016856797.1">
    <property type="nucleotide sequence ID" value="XM_017001308.1"/>
</dbReference>
<dbReference type="RefSeq" id="XP_016856798.1">
    <property type="nucleotide sequence ID" value="XM_017001309.1"/>
</dbReference>
<dbReference type="RefSeq" id="XP_016856799.1">
    <property type="nucleotide sequence ID" value="XM_017001310.1"/>
</dbReference>
<dbReference type="RefSeq" id="XP_047276844.1">
    <molecule id="P15529-1"/>
    <property type="nucleotide sequence ID" value="XM_047420888.1"/>
</dbReference>
<dbReference type="RefSeq" id="XP_047276850.1">
    <molecule id="P15529-11"/>
    <property type="nucleotide sequence ID" value="XM_047420894.1"/>
</dbReference>
<dbReference type="RefSeq" id="XP_047276857.1">
    <molecule id="P15529-14"/>
    <property type="nucleotide sequence ID" value="XM_047420901.1"/>
</dbReference>
<dbReference type="RefSeq" id="XP_047276865.1">
    <molecule id="P15529-12"/>
    <property type="nucleotide sequence ID" value="XM_047420909.1"/>
</dbReference>
<dbReference type="RefSeq" id="XP_054192620.1">
    <molecule id="P15529-1"/>
    <property type="nucleotide sequence ID" value="XM_054336645.1"/>
</dbReference>
<dbReference type="RefSeq" id="XP_054192621.1">
    <molecule id="P15529-5"/>
    <property type="nucleotide sequence ID" value="XM_054336646.1"/>
</dbReference>
<dbReference type="RefSeq" id="XP_054192622.1">
    <molecule id="P15529-11"/>
    <property type="nucleotide sequence ID" value="XM_054336647.1"/>
</dbReference>
<dbReference type="RefSeq" id="XP_054192623.1">
    <molecule id="P15529-14"/>
    <property type="nucleotide sequence ID" value="XM_054336648.1"/>
</dbReference>
<dbReference type="RefSeq" id="XP_054192624.1">
    <molecule id="P15529-12"/>
    <property type="nucleotide sequence ID" value="XM_054336649.1"/>
</dbReference>
<dbReference type="PDB" id="1CKL">
    <property type="method" value="X-ray"/>
    <property type="resolution" value="3.10 A"/>
    <property type="chains" value="A/B/C/D/E/F=35-160"/>
</dbReference>
<dbReference type="PDB" id="2O39">
    <property type="method" value="X-ray"/>
    <property type="resolution" value="2.85 A"/>
    <property type="chains" value="C/D=35-160"/>
</dbReference>
<dbReference type="PDB" id="3INB">
    <property type="method" value="X-ray"/>
    <property type="resolution" value="3.10 A"/>
    <property type="chains" value="C/D=35-160"/>
</dbReference>
<dbReference type="PDB" id="3L89">
    <property type="method" value="X-ray"/>
    <property type="resolution" value="3.50 A"/>
    <property type="chains" value="M/N/O/P/Q/R/S/T/U/V/W/X=35-160"/>
</dbReference>
<dbReference type="PDB" id="3O8E">
    <property type="method" value="X-ray"/>
    <property type="resolution" value="2.84 A"/>
    <property type="chains" value="B/D=35-286"/>
</dbReference>
<dbReference type="PDB" id="5FO8">
    <property type="method" value="X-ray"/>
    <property type="resolution" value="2.40 A"/>
    <property type="chains" value="C=35-286"/>
</dbReference>
<dbReference type="PDB" id="8QK3">
    <property type="method" value="EM"/>
    <property type="resolution" value="3.20 A"/>
    <property type="chains" value="E=1-392"/>
</dbReference>
<dbReference type="PDBsum" id="1CKL"/>
<dbReference type="PDBsum" id="2O39"/>
<dbReference type="PDBsum" id="3INB"/>
<dbReference type="PDBsum" id="3L89"/>
<dbReference type="PDBsum" id="3O8E"/>
<dbReference type="PDBsum" id="5FO8"/>
<dbReference type="PDBsum" id="8QK3"/>
<dbReference type="EMDB" id="EMD-18455"/>
<dbReference type="SMR" id="P15529"/>
<dbReference type="BioGRID" id="110346">
    <property type="interactions" value="45"/>
</dbReference>
<dbReference type="DIP" id="DIP-41232N"/>
<dbReference type="FunCoup" id="P15529">
    <property type="interactions" value="194"/>
</dbReference>
<dbReference type="IntAct" id="P15529">
    <property type="interactions" value="22"/>
</dbReference>
<dbReference type="MINT" id="P15529"/>
<dbReference type="STRING" id="9606.ENSP00000313875"/>
<dbReference type="GlyConnect" id="1501">
    <property type="glycosylation" value="8 N-Linked glycans (2 sites)"/>
</dbReference>
<dbReference type="GlyCosmos" id="P15529">
    <property type="glycosylation" value="21 sites, 7 glycans"/>
</dbReference>
<dbReference type="GlyGen" id="P15529">
    <property type="glycosylation" value="23 sites, 55 N-linked glycans (2 sites), 2 O-linked glycans (2 sites)"/>
</dbReference>
<dbReference type="iPTMnet" id="P15529"/>
<dbReference type="PhosphoSitePlus" id="P15529"/>
<dbReference type="SwissPalm" id="P15529"/>
<dbReference type="BioMuta" id="CD46"/>
<dbReference type="DMDM" id="41019474"/>
<dbReference type="jPOST" id="P15529"/>
<dbReference type="MassIVE" id="P15529"/>
<dbReference type="PaxDb" id="9606-ENSP00000313875"/>
<dbReference type="PeptideAtlas" id="P15529"/>
<dbReference type="ProteomicsDB" id="53167">
    <molecule id="P15529-1"/>
</dbReference>
<dbReference type="ProteomicsDB" id="53168">
    <molecule id="P15529-10"/>
</dbReference>
<dbReference type="ProteomicsDB" id="53169">
    <molecule id="P15529-11"/>
</dbReference>
<dbReference type="ProteomicsDB" id="53170">
    <molecule id="P15529-12"/>
</dbReference>
<dbReference type="ProteomicsDB" id="53171">
    <molecule id="P15529-13"/>
</dbReference>
<dbReference type="ProteomicsDB" id="53172">
    <molecule id="P15529-14"/>
</dbReference>
<dbReference type="ProteomicsDB" id="53173">
    <molecule id="P15529-15"/>
</dbReference>
<dbReference type="ProteomicsDB" id="53174">
    <molecule id="P15529-16"/>
</dbReference>
<dbReference type="ProteomicsDB" id="53175">
    <molecule id="P15529-2"/>
</dbReference>
<dbReference type="ProteomicsDB" id="53176">
    <molecule id="P15529-3"/>
</dbReference>
<dbReference type="ProteomicsDB" id="53177">
    <molecule id="P15529-4"/>
</dbReference>
<dbReference type="ProteomicsDB" id="53178">
    <molecule id="P15529-5"/>
</dbReference>
<dbReference type="ProteomicsDB" id="53179">
    <molecule id="P15529-6"/>
</dbReference>
<dbReference type="ProteomicsDB" id="53180">
    <molecule id="P15529-7"/>
</dbReference>
<dbReference type="ProteomicsDB" id="53181">
    <molecule id="P15529-8"/>
</dbReference>
<dbReference type="ProteomicsDB" id="53182">
    <molecule id="P15529-9"/>
</dbReference>
<dbReference type="Pumba" id="P15529"/>
<dbReference type="TopDownProteomics" id="P15529-4">
    <molecule id="P15529-4"/>
</dbReference>
<dbReference type="ABCD" id="P15529">
    <property type="antibodies" value="10 sequenced antibodies"/>
</dbReference>
<dbReference type="Antibodypedia" id="2378">
    <property type="antibodies" value="1311 antibodies from 46 providers"/>
</dbReference>
<dbReference type="DNASU" id="4179"/>
<dbReference type="Ensembl" id="ENST00000322875.8">
    <molecule id="P15529-2"/>
    <property type="protein sequence ID" value="ENSP00000313875.4"/>
    <property type="gene ID" value="ENSG00000117335.21"/>
</dbReference>
<dbReference type="Ensembl" id="ENST00000322918.9">
    <molecule id="P15529-9"/>
    <property type="protein sequence ID" value="ENSP00000314664.5"/>
    <property type="gene ID" value="ENSG00000117335.21"/>
</dbReference>
<dbReference type="Ensembl" id="ENST00000354848.5">
    <molecule id="P15529-3"/>
    <property type="protein sequence ID" value="ENSP00000346912.1"/>
    <property type="gene ID" value="ENSG00000117335.21"/>
</dbReference>
<dbReference type="Ensembl" id="ENST00000357714.5">
    <molecule id="P15529-4"/>
    <property type="protein sequence ID" value="ENSP00000350346.1"/>
    <property type="gene ID" value="ENSG00000117335.21"/>
</dbReference>
<dbReference type="Ensembl" id="ENST00000358170.6">
    <molecule id="P15529-1"/>
    <property type="protein sequence ID" value="ENSP00000350893.2"/>
    <property type="gene ID" value="ENSG00000117335.21"/>
</dbReference>
<dbReference type="Ensembl" id="ENST00000360212.6">
    <molecule id="P15529-7"/>
    <property type="protein sequence ID" value="ENSP00000353342.2"/>
    <property type="gene ID" value="ENSG00000117335.21"/>
</dbReference>
<dbReference type="Ensembl" id="ENST00000367041.5">
    <molecule id="P15529-12"/>
    <property type="protein sequence ID" value="ENSP00000356008.1"/>
    <property type="gene ID" value="ENSG00000117335.21"/>
</dbReference>
<dbReference type="Ensembl" id="ENST00000367042.6">
    <molecule id="P15529-11"/>
    <property type="protein sequence ID" value="ENSP00000356009.1"/>
    <property type="gene ID" value="ENSG00000117335.21"/>
</dbReference>
<dbReference type="Ensembl" id="ENST00000367047.5">
    <molecule id="P15529-16"/>
    <property type="protein sequence ID" value="ENSP00000356014.1"/>
    <property type="gene ID" value="ENSG00000117335.21"/>
</dbReference>
<dbReference type="Ensembl" id="ENST00000480003.5">
    <molecule id="P15529-6"/>
    <property type="protein sequence ID" value="ENSP00000418471.1"/>
    <property type="gene ID" value="ENSG00000117335.21"/>
</dbReference>
<dbReference type="GeneID" id="4179"/>
<dbReference type="KEGG" id="hsa:4179"/>
<dbReference type="MANE-Select" id="ENST00000367042.6">
    <molecule id="P15529-11"/>
    <property type="protein sequence ID" value="ENSP00000356009.1"/>
    <property type="RefSeq nucleotide sequence ID" value="NM_172351.3"/>
    <property type="RefSeq protein sequence ID" value="NP_758861.1"/>
</dbReference>
<dbReference type="UCSC" id="uc001hgc.4">
    <molecule id="P15529-1"/>
    <property type="organism name" value="human"/>
</dbReference>
<dbReference type="AGR" id="HGNC:6953"/>
<dbReference type="CTD" id="4179"/>
<dbReference type="DisGeNET" id="4179"/>
<dbReference type="GeneCards" id="CD46"/>
<dbReference type="GeneReviews" id="CD46"/>
<dbReference type="HGNC" id="HGNC:6953">
    <property type="gene designation" value="CD46"/>
</dbReference>
<dbReference type="HPA" id="ENSG00000117335">
    <property type="expression patterns" value="Low tissue specificity"/>
</dbReference>
<dbReference type="MalaCards" id="CD46"/>
<dbReference type="MIM" id="120920">
    <property type="type" value="gene+phenotype"/>
</dbReference>
<dbReference type="MIM" id="612922">
    <property type="type" value="phenotype"/>
</dbReference>
<dbReference type="neXtProt" id="NX_P15529"/>
<dbReference type="OpenTargets" id="ENSG00000117335"/>
<dbReference type="Orphanet" id="544472">
    <property type="disease" value="Atypical hemolytic uremic syndrome with complement gene abnormality"/>
</dbReference>
<dbReference type="Orphanet" id="244242">
    <property type="disease" value="HELLP syndrome"/>
</dbReference>
<dbReference type="PharmGKB" id="PA30700"/>
<dbReference type="VEuPathDB" id="HostDB:ENSG00000117335"/>
<dbReference type="eggNOG" id="ENOG502QPUC">
    <property type="taxonomic scope" value="Eukaryota"/>
</dbReference>
<dbReference type="GeneTree" id="ENSGT00940000161381"/>
<dbReference type="HOGENOM" id="CLU_020107_1_2_1"/>
<dbReference type="InParanoid" id="P15529"/>
<dbReference type="OMA" id="CVKGPRP"/>
<dbReference type="OrthoDB" id="6480633at2759"/>
<dbReference type="PAN-GO" id="P15529">
    <property type="GO annotations" value="3 GO annotations based on evolutionary models"/>
</dbReference>
<dbReference type="PhylomeDB" id="P15529"/>
<dbReference type="TreeFam" id="TF334137"/>
<dbReference type="PathwayCommons" id="P15529"/>
<dbReference type="Reactome" id="R-HSA-977606">
    <property type="pathway name" value="Regulation of Complement cascade"/>
</dbReference>
<dbReference type="SignaLink" id="P15529"/>
<dbReference type="SIGNOR" id="P15529"/>
<dbReference type="BioGRID-ORCS" id="4179">
    <property type="hits" value="32 hits in 1167 CRISPR screens"/>
</dbReference>
<dbReference type="ChiTaRS" id="CD46">
    <property type="organism name" value="human"/>
</dbReference>
<dbReference type="EvolutionaryTrace" id="P15529"/>
<dbReference type="GeneWiki" id="CD46"/>
<dbReference type="GenomeRNAi" id="4179"/>
<dbReference type="Pharos" id="P15529">
    <property type="development level" value="Tbio"/>
</dbReference>
<dbReference type="PRO" id="PR:P15529"/>
<dbReference type="Proteomes" id="UP000005640">
    <property type="component" value="Chromosome 1"/>
</dbReference>
<dbReference type="RNAct" id="P15529">
    <property type="molecule type" value="protein"/>
</dbReference>
<dbReference type="Bgee" id="ENSG00000117335">
    <property type="expression patterns" value="Expressed in palpebral conjunctiva and 213 other cell types or tissues"/>
</dbReference>
<dbReference type="ExpressionAtlas" id="P15529">
    <property type="expression patterns" value="baseline and differential"/>
</dbReference>
<dbReference type="GO" id="GO:0009986">
    <property type="term" value="C:cell surface"/>
    <property type="evidence" value="ECO:0000314"/>
    <property type="project" value="UniProtKB"/>
</dbReference>
<dbReference type="GO" id="GO:0070062">
    <property type="term" value="C:extracellular exosome"/>
    <property type="evidence" value="ECO:0007005"/>
    <property type="project" value="UniProtKB"/>
</dbReference>
<dbReference type="GO" id="GO:0005615">
    <property type="term" value="C:extracellular space"/>
    <property type="evidence" value="ECO:0000318"/>
    <property type="project" value="GO_Central"/>
</dbReference>
<dbReference type="GO" id="GO:0005925">
    <property type="term" value="C:focal adhesion"/>
    <property type="evidence" value="ECO:0007005"/>
    <property type="project" value="UniProtKB"/>
</dbReference>
<dbReference type="GO" id="GO:0002079">
    <property type="term" value="C:inner acrosomal membrane"/>
    <property type="evidence" value="ECO:0007669"/>
    <property type="project" value="UniProtKB-SubCell"/>
</dbReference>
<dbReference type="GO" id="GO:0005886">
    <property type="term" value="C:plasma membrane"/>
    <property type="evidence" value="ECO:0000314"/>
    <property type="project" value="AgBase"/>
</dbReference>
<dbReference type="GO" id="GO:0045296">
    <property type="term" value="F:cadherin binding"/>
    <property type="evidence" value="ECO:0000353"/>
    <property type="project" value="UniProtKB"/>
</dbReference>
<dbReference type="GO" id="GO:0038023">
    <property type="term" value="F:signaling receptor activity"/>
    <property type="evidence" value="ECO:0000304"/>
    <property type="project" value="ProtInc"/>
</dbReference>
<dbReference type="GO" id="GO:0001618">
    <property type="term" value="F:virus receptor activity"/>
    <property type="evidence" value="ECO:0007669"/>
    <property type="project" value="UniProtKB-KW"/>
</dbReference>
<dbReference type="GO" id="GO:0002250">
    <property type="term" value="P:adaptive immune response"/>
    <property type="evidence" value="ECO:0000305"/>
    <property type="project" value="UniProtKB"/>
</dbReference>
<dbReference type="GO" id="GO:0006958">
    <property type="term" value="P:complement activation, classical pathway"/>
    <property type="evidence" value="ECO:0007669"/>
    <property type="project" value="UniProtKB-KW"/>
</dbReference>
<dbReference type="GO" id="GO:0045087">
    <property type="term" value="P:innate immune response"/>
    <property type="evidence" value="ECO:0007669"/>
    <property type="project" value="UniProtKB-KW"/>
</dbReference>
<dbReference type="GO" id="GO:0045959">
    <property type="term" value="P:negative regulation of complement activation, classical pathway"/>
    <property type="evidence" value="ECO:0000318"/>
    <property type="project" value="GO_Central"/>
</dbReference>
<dbReference type="GO" id="GO:0010629">
    <property type="term" value="P:negative regulation of gene expression"/>
    <property type="evidence" value="ECO:0000314"/>
    <property type="project" value="UniProtKB"/>
</dbReference>
<dbReference type="GO" id="GO:0010628">
    <property type="term" value="P:positive regulation of gene expression"/>
    <property type="evidence" value="ECO:0000315"/>
    <property type="project" value="UniProtKB"/>
</dbReference>
<dbReference type="GO" id="GO:0032733">
    <property type="term" value="P:positive regulation of interleukin-10 production"/>
    <property type="evidence" value="ECO:0000314"/>
    <property type="project" value="UniProtKB"/>
</dbReference>
<dbReference type="GO" id="GO:0043382">
    <property type="term" value="P:positive regulation of memory T cell differentiation"/>
    <property type="evidence" value="ECO:0000314"/>
    <property type="project" value="UniProtKB"/>
</dbReference>
<dbReference type="GO" id="GO:0045591">
    <property type="term" value="P:positive regulation of regulatory T cell differentiation"/>
    <property type="evidence" value="ECO:0000314"/>
    <property type="project" value="UniProtKB"/>
</dbReference>
<dbReference type="GO" id="GO:0042102">
    <property type="term" value="P:positive regulation of T cell proliferation"/>
    <property type="evidence" value="ECO:0000314"/>
    <property type="project" value="UniProtKB"/>
</dbReference>
<dbReference type="GO" id="GO:0071636">
    <property type="term" value="P:positive regulation of transforming growth factor beta production"/>
    <property type="evidence" value="ECO:0000314"/>
    <property type="project" value="UniProtKB"/>
</dbReference>
<dbReference type="GO" id="GO:0008593">
    <property type="term" value="P:regulation of Notch signaling pathway"/>
    <property type="evidence" value="ECO:0000314"/>
    <property type="project" value="UniProtKB"/>
</dbReference>
<dbReference type="GO" id="GO:0035581">
    <property type="term" value="P:sequestering of extracellular ligand from receptor"/>
    <property type="evidence" value="ECO:0000314"/>
    <property type="project" value="UniProtKB"/>
</dbReference>
<dbReference type="GO" id="GO:0007338">
    <property type="term" value="P:single fertilization"/>
    <property type="evidence" value="ECO:0007669"/>
    <property type="project" value="UniProtKB-KW"/>
</dbReference>
<dbReference type="GO" id="GO:0002456">
    <property type="term" value="P:T cell mediated immunity"/>
    <property type="evidence" value="ECO:0000315"/>
    <property type="project" value="UniProtKB"/>
</dbReference>
<dbReference type="CDD" id="cd00033">
    <property type="entry name" value="CCP"/>
    <property type="match status" value="4"/>
</dbReference>
<dbReference type="FunFam" id="2.10.70.10:FF:000014">
    <property type="entry name" value="Membrane cofactor protein"/>
    <property type="match status" value="1"/>
</dbReference>
<dbReference type="FunFam" id="2.10.70.10:FF:000042">
    <property type="entry name" value="Membrane cofactor protein"/>
    <property type="match status" value="1"/>
</dbReference>
<dbReference type="FunFam" id="2.10.70.10:FF:000046">
    <property type="entry name" value="Membrane cofactor protein"/>
    <property type="match status" value="1"/>
</dbReference>
<dbReference type="FunFam" id="2.10.70.10:FF:000080">
    <property type="entry name" value="Membrane cofactor protein"/>
    <property type="match status" value="1"/>
</dbReference>
<dbReference type="Gene3D" id="2.10.70.10">
    <property type="entry name" value="Complement Module, domain 1"/>
    <property type="match status" value="4"/>
</dbReference>
<dbReference type="InterPro" id="IPR017341">
    <property type="entry name" value="CD46"/>
</dbReference>
<dbReference type="InterPro" id="IPR051277">
    <property type="entry name" value="SEZ6_CSMD_C4BPB_Regulators"/>
</dbReference>
<dbReference type="InterPro" id="IPR035976">
    <property type="entry name" value="Sushi/SCR/CCP_sf"/>
</dbReference>
<dbReference type="InterPro" id="IPR000436">
    <property type="entry name" value="Sushi_SCR_CCP_dom"/>
</dbReference>
<dbReference type="PANTHER" id="PTHR45656">
    <property type="entry name" value="PROTEIN CBR-CLEC-78"/>
    <property type="match status" value="1"/>
</dbReference>
<dbReference type="PANTHER" id="PTHR45656:SF4">
    <property type="entry name" value="PROTEIN CBR-CLEC-78"/>
    <property type="match status" value="1"/>
</dbReference>
<dbReference type="Pfam" id="PF00084">
    <property type="entry name" value="Sushi"/>
    <property type="match status" value="4"/>
</dbReference>
<dbReference type="PIRSF" id="PIRSF037971">
    <property type="entry name" value="TLX_CD46"/>
    <property type="match status" value="1"/>
</dbReference>
<dbReference type="SMART" id="SM00032">
    <property type="entry name" value="CCP"/>
    <property type="match status" value="4"/>
</dbReference>
<dbReference type="SUPFAM" id="SSF57535">
    <property type="entry name" value="Complement control module/SCR domain"/>
    <property type="match status" value="4"/>
</dbReference>
<dbReference type="PROSITE" id="PS50923">
    <property type="entry name" value="SUSHI"/>
    <property type="match status" value="4"/>
</dbReference>
<organism>
    <name type="scientific">Homo sapiens</name>
    <name type="common">Human</name>
    <dbReference type="NCBI Taxonomy" id="9606"/>
    <lineage>
        <taxon>Eukaryota</taxon>
        <taxon>Metazoa</taxon>
        <taxon>Chordata</taxon>
        <taxon>Craniata</taxon>
        <taxon>Vertebrata</taxon>
        <taxon>Euteleostomi</taxon>
        <taxon>Mammalia</taxon>
        <taxon>Eutheria</taxon>
        <taxon>Euarchontoglires</taxon>
        <taxon>Primates</taxon>
        <taxon>Haplorrhini</taxon>
        <taxon>Catarrhini</taxon>
        <taxon>Hominidae</taxon>
        <taxon>Homo</taxon>
    </lineage>
</organism>
<gene>
    <name type="primary">CD46</name>
    <name type="synonym">MCP</name>
    <name type="synonym">MIC10</name>
</gene>